<reference key="1">
    <citation type="journal article" date="1992" name="Virology">
        <title>Comparison of a dengue-2 virus and its candidate vaccine derivative: sequence relationships with the flaviviruses and other viruses.</title>
        <authorList>
            <person name="Blok J."/>
            <person name="McWilliam S.M."/>
            <person name="Butler H.C."/>
            <person name="Gibbs A.J."/>
            <person name="Weiller G."/>
            <person name="Herring B.L."/>
            <person name="Hemsley A.C."/>
            <person name="Aaskov J.G."/>
            <person name="Yoksan S."/>
            <person name="Bhamarapravati N."/>
        </authorList>
    </citation>
    <scope>NUCLEOTIDE SEQUENCE [GENOMIC RNA]</scope>
</reference>
<reference key="2">
    <citation type="journal article" date="2003" name="J. Virol.">
        <title>Flavivirus capsid is a dimeric alpha-helical protein.</title>
        <authorList>
            <person name="Jones C.T."/>
            <person name="Ma L."/>
            <person name="Burgner J.W."/>
            <person name="Groesch T.D."/>
            <person name="Post C.B."/>
            <person name="Kuhn R.J."/>
        </authorList>
    </citation>
    <scope>SUBUNIT (CAPSID PROTEIN C)</scope>
</reference>
<reference key="3">
    <citation type="journal article" date="2004" name="J. Virol.">
        <title>Alterations of pr-M cleavage and virus export in pr-M junction chimeric dengue viruses.</title>
        <authorList>
            <person name="Keelapang P."/>
            <person name="Sriburi R."/>
            <person name="Supasa S."/>
            <person name="Panyadee N."/>
            <person name="Songjaeng A."/>
            <person name="Jairungsri A."/>
            <person name="Puttikhunt C."/>
            <person name="Kasinrerk W."/>
            <person name="Malasit P."/>
            <person name="Sittisombut N."/>
        </authorList>
    </citation>
    <scope>PROTEOLYTIC PROCESSING (GENOME POLYPROTEIN)</scope>
</reference>
<reference key="4">
    <citation type="journal article" date="2004" name="J. Gen. Virol.">
        <title>Identification of the homotypic interaction domain of the core protein of dengue virus type 2.</title>
        <authorList>
            <person name="Wang S.H."/>
            <person name="Syu W.J."/>
            <person name="Hu S.T."/>
        </authorList>
    </citation>
    <scope>SUBUNIT (CAPSID PROTEIN C)</scope>
    <scope>REGION OF HOMODIMERIZATION (CAPSID PROTEIN C)</scope>
</reference>
<reference key="5">
    <citation type="journal article" date="2005" name="J. Virol.">
        <title>Inhibition of alpha/beta interferon signaling by the NS4B protein of flaviviruses.</title>
        <authorList>
            <person name="Munoz-Jordan J.L."/>
            <person name="Laurent-Rolle M."/>
            <person name="Ashour J."/>
            <person name="Martinez-Sobrido L."/>
            <person name="Ashok M."/>
            <person name="Lipkin W.I."/>
            <person name="Garcia-Sastre A."/>
        </authorList>
    </citation>
    <scope>FUNCTION (NON-STRUCTURAL PROTEIN 4B)</scope>
    <scope>FUNCTION (PEPTIDE 2K)</scope>
</reference>
<reference key="6">
    <citation type="journal article" date="2006" name="J. Infect. Dis.">
        <title>Vascular leakage in severe dengue virus infections: a potential role for the nonstructural viral protein NS1 and complement.</title>
        <authorList>
            <person name="Avirutnan P."/>
            <person name="Punyadee N."/>
            <person name="Noisakran S."/>
            <person name="Komoltri C."/>
            <person name="Thiemmeca S."/>
            <person name="Auethavornanan K."/>
            <person name="Jairungsri A."/>
            <person name="Kanlaya R."/>
            <person name="Tangthawornchaikul N."/>
            <person name="Puttikhunt C."/>
            <person name="Pattanakitsakul S.N."/>
            <person name="Yenchitsomanus P.T."/>
            <person name="Mongkolsapaya J."/>
            <person name="Kasinrerk W."/>
            <person name="Sittisombut N."/>
            <person name="Husmann M."/>
            <person name="Blettner M."/>
            <person name="Vasanawathana S."/>
            <person name="Bhakdi S."/>
            <person name="Malasit P."/>
        </authorList>
    </citation>
    <scope>FUNCTION (NON-STRUCTURAL PROTEIN 1)</scope>
</reference>
<reference key="7">
    <citation type="journal article" date="2006" name="J. Virol.">
        <title>Nuclear localization of flavivirus RNA synthesis in infected cells.</title>
        <authorList>
            <person name="Uchil P.D."/>
            <person name="Kumar A.V."/>
            <person name="Satchidanandam V."/>
        </authorList>
    </citation>
    <scope>SUBCELLULAR LOCATION (SERINE PROTEASE NS3)</scope>
    <scope>SUBCELLULAR LOCATION (RNA-DIRECTED RNA POLYMERASE NS5)</scope>
    <source>
        <strain>TR 1751</strain>
    </source>
</reference>
<reference key="8">
    <citation type="journal article" date="2007" name="Biochem. J.">
        <title>Cleavage preference distinguishes the two-component NS2B-NS3 serine proteinases of Dengue and West Nile viruses.</title>
        <authorList>
            <person name="Shiryaev S.A."/>
            <person name="Kozlov I.A."/>
            <person name="Ratnikov B.I."/>
            <person name="Smith J.W."/>
            <person name="Lebl M."/>
            <person name="Strongin A.Y."/>
        </authorList>
    </citation>
    <scope>PROTEOLYTIC PROCESSING (GENOME POLYPROTEIN)</scope>
</reference>
<reference key="9">
    <citation type="journal article" date="2004" name="J. Virol.">
        <title>Contribution of disulfide bridging to epitope expression of the dengue type 2 virus envelope glycoprotein.</title>
        <authorList>
            <person name="Roehrig J.T."/>
            <person name="Volpe K.E."/>
            <person name="Squires J."/>
            <person name="Hunt A.R."/>
            <person name="Davis B.S."/>
            <person name="Chang G.J."/>
        </authorList>
    </citation>
    <scope>DISULFIDE BOND (ENVELOPE PROTEIN E)</scope>
</reference>
<reference key="10">
    <citation type="journal article" date="2005" name="J. Immunol.">
        <title>Dengue virus type 2 antagonizes IFN-alpha but not IFN-gamma antiviral effect via down-regulating Tyk2-STAT signaling in the human dendritic cell.</title>
        <authorList>
            <person name="Ho L.J."/>
            <person name="Hung L.F."/>
            <person name="Weng C.Y."/>
            <person name="Wu W.L."/>
            <person name="Chou P."/>
            <person name="Lin Y.L."/>
            <person name="Chang D.M."/>
            <person name="Tai T.Y."/>
            <person name="Lai J.H."/>
        </authorList>
    </citation>
    <scope>FUNCTION (RNA-DIRECTED RNA POLYMERASE NS5)</scope>
</reference>
<reference key="11">
    <citation type="journal article" date="2007" name="J. Virol. Methods">
        <title>Characterization of dengue virus NS1 stably expressed in 293T cell lines.</title>
        <authorList>
            <person name="Noisakran S."/>
            <person name="Dechtawewat T."/>
            <person name="Rinkaewkan P."/>
            <person name="Puttikhunt C."/>
            <person name="Kanjanahaluethai A."/>
            <person name="Kasinrerk W."/>
            <person name="Sittisombut N."/>
            <person name="Malasit P."/>
        </authorList>
    </citation>
    <scope>CHARACTERIZATION (NON-STRUCTURAL PROTEIN 1)</scope>
</reference>
<reference key="12">
    <citation type="journal article" date="2009" name="RNA">
        <title>The flavivirus NS5 protein is a true RNA guanylyltransferase that catalyzes a two-step reaction to form the RNA cap structure.</title>
        <authorList>
            <person name="Issur M."/>
            <person name="Geiss B.J."/>
            <person name="Bougie I."/>
            <person name="Picard-Jean F."/>
            <person name="Despins S."/>
            <person name="Mayette J."/>
            <person name="Hobdey S.E."/>
            <person name="Bisaillon M."/>
        </authorList>
    </citation>
    <scope>FUNCTION (RNA-DIRECTED RNA POLYMERASE NS5)</scope>
    <scope>INTERACTION WITH RNA-DIRECTED RNA POLYMERASE NS5 (SERINE PROTEASE NS3)</scope>
    <scope>INTERACTION WITH SERINE PROTEASE NS3 (RNA-DIRECTED RNA POLYMERASE NS5)</scope>
</reference>
<reference key="13">
    <citation type="journal article" date="2009" name="J. Infect. Dis.">
        <title>Dengue virus NS5 inhibits interferon-alpha signaling by blocking signal transducer and activator of transcription 2 phosphorylation.</title>
        <authorList>
            <person name="Mazzon M."/>
            <person name="Jones M."/>
            <person name="Davidson A."/>
            <person name="Chain B."/>
            <person name="Jacobs M."/>
        </authorList>
    </citation>
    <scope>FUNCTION (RNA-DIRECTED RNA POLYMERASE NS5)</scope>
    <scope>INTERACTION WITH HUMAN STAT2 (RNA-DIRECTED RNA POLYMERASE NS5)</scope>
</reference>
<reference key="14">
    <citation type="journal article" date="2009" name="J. Biomed. Sci.">
        <title>Characterization of dengue virus entry into HepG2 cells.</title>
        <authorList>
            <person name="Suksanpaisan L."/>
            <person name="Susantad T."/>
            <person name="Smith D.R."/>
        </authorList>
    </citation>
    <scope>FUNCTION (ENVELOPE PROTEIN E)</scope>
</reference>
<reference key="15">
    <citation type="journal article" date="2010" name="Cell. Microbiol.">
        <title>Human Sec3 protein is a novel transcriptional and translational repressor of flavivirus.</title>
        <authorList>
            <person name="Bhuvanakantham R."/>
            <person name="Li J."/>
            <person name="Tan T.T."/>
            <person name="Ng M.L."/>
        </authorList>
    </citation>
    <scope>INTERACTION WITH HUMAN EXOC1 (CAPSID PROTEIN C)</scope>
    <scope>SUBCELLULAR LOCATION (CAPSID PROTEIN C)</scope>
</reference>
<reference key="16">
    <citation type="journal article" date="2013" name="Cell. Microbiol.">
        <title>West Nile virus and dengue virus capsid protein negates the antiviral activity of human Sec3 protein through the proteasome pathway.</title>
        <authorList>
            <person name="Bhuvanakantham R."/>
            <person name="Ng M.L."/>
        </authorList>
    </citation>
    <scope>INTERACTION WITH HUMAN EXOC1 (CAPSID PROTEIN C)</scope>
    <scope>FUNCTION (CAPSID PROTEIN C)</scope>
    <scope>MUTAGENESIS OF PHE-13</scope>
</reference>
<reference key="17">
    <citation type="journal article" date="2016" name="J. Virol.">
        <title>SUMO modification stabilizes dengue virus nonstructural protein 5 to support virus replication.</title>
        <authorList>
            <person name="Su C.I."/>
            <person name="Tseng C.H."/>
            <person name="Yu C.Y."/>
            <person name="Lai M.M."/>
        </authorList>
    </citation>
    <scope>SUMOYLATION (RNA-DIRECTED RNA POLYMERASE NS5)</scope>
    <scope>MUTAGENESIS OF 2568-VAL--LEU-2571</scope>
</reference>
<reference key="18">
    <citation type="journal article" date="2018" name="Cell">
        <title>Comparative Flavivirus-Host Protein Interaction Mapping Reveals Mechanisms of Dengue and Zika Virus Pathogenesis.</title>
        <authorList>
            <person name="Shah P.S."/>
            <person name="Link N."/>
            <person name="Jang G.M."/>
            <person name="Sharp P.P."/>
            <person name="Zhu T."/>
            <person name="Swaney D.L."/>
            <person name="Johnson J.R."/>
            <person name="Von Dollen J."/>
            <person name="Ramage H.R."/>
            <person name="Satkamp L."/>
            <person name="Newton B."/>
            <person name="Huettenhain R."/>
            <person name="Petit M.J."/>
            <person name="Baum T."/>
            <person name="Everitt A."/>
            <person name="Laufman O."/>
            <person name="Tassetto M."/>
            <person name="Shales M."/>
            <person name="Stevenson E."/>
            <person name="Iglesias G.N."/>
            <person name="Shokat L."/>
            <person name="Tripathi S."/>
            <person name="Balasubramaniam V."/>
            <person name="Webb L.G."/>
            <person name="Aguirre S."/>
            <person name="Willsey A.J."/>
            <person name="Garcia-Sastre A."/>
            <person name="Pollard K.S."/>
            <person name="Cherry S."/>
            <person name="Gamarnik A.V."/>
            <person name="Marazzi I."/>
            <person name="Taunton J."/>
            <person name="Fernandez-Sesma A."/>
            <person name="Bellen H.J."/>
            <person name="Andino R."/>
            <person name="Krogan N.J."/>
        </authorList>
    </citation>
    <scope>FUNCTION (RNA-DIRECTED RNA POLYMERASE NS5)</scope>
    <scope>INTERACTION WITH HUMAN STAT2 (RNA-DIRECTED RNA POLYMERASE NS5)</scope>
    <scope>INTERACTION WITH HUMAN PAF1 COMPLEX (RNA-DIRECTED RNA POLYMERASE NS5)</scope>
    <scope>INTERACTION WITH HUMAN SRPRA (NON-STRUCTURAL PROTEIN 4A)</scope>
    <scope>INTERACTION WITH HUMAN SEC61G (NON-STRUCTURAL PROTEIN 4A)</scope>
    <scope>SUBCELLULAR LOCATION (NON-STRUCTURAL PROTEIN 4A)</scope>
    <scope>SUBCELLULAR LOCATION (RNA-DIRECTED RNA POLYMERASE NS5)</scope>
</reference>
<reference key="19">
    <citation type="journal article" date="2023" name="Virol. J.">
        <title>DENV-2 NS1 promotes AMPK-LKB1 interaction to activate AMPK/ERK/mTOR signaling pathway to induce autophagy.</title>
        <authorList>
            <person name="Wu N."/>
            <person name="Ji J."/>
            <person name="Gou X."/>
            <person name="Hu P."/>
            <person name="Cheng Y."/>
            <person name="Liu Y."/>
            <person name="Wang Y."/>
            <person name="Zhang Q."/>
            <person name="Zuo L."/>
        </authorList>
    </citation>
    <scope>FUNCTION (NON-STRUCTURAL PROTEIN 1)</scope>
    <scope>INTERACTION WITH HOST PRKAA1 (NON-STRUCTURAL PROTEIN 1)</scope>
    <scope>SUBCELLULAR LOCATION (NON-STRUCTURAL PROTEIN 1)</scope>
</reference>
<reference key="20">
    <citation type="journal article" date="2008" name="Nat. Struct. Mol. Biol.">
        <title>Binding of a neutralizing antibody to dengue virus alters the arrangement of surface glycoproteins.</title>
        <authorList>
            <person name="Lok S.M."/>
            <person name="Kostyuchenko V."/>
            <person name="Nybakken G.E."/>
            <person name="Holdaway H.A."/>
            <person name="Battisti A.J."/>
            <person name="Sukupolvi-Petty S."/>
            <person name="Sedlak D."/>
            <person name="Fremont D.H."/>
            <person name="Chipman P.R."/>
            <person name="Roehrig J.T."/>
            <person name="Diamond M.S."/>
            <person name="Kuhn R.J."/>
            <person name="Rossmann M.G."/>
        </authorList>
    </citation>
    <scope>X-RAY CRYSTALLOGRAPHY (3.8 ANGSTROMS) OF 578-674</scope>
</reference>
<keyword id="KW-0002">3D-structure</keyword>
<keyword id="KW-0007">Acetylation</keyword>
<keyword id="KW-1072">Activation of host autophagy by virus</keyword>
<keyword id="KW-0067">ATP-binding</keyword>
<keyword id="KW-0167">Capsid protein</keyword>
<keyword id="KW-1165">Clathrin-mediated endocytosis of virus by host</keyword>
<keyword id="KW-0165">Cleavage on pair of basic residues</keyword>
<keyword id="KW-1015">Disulfide bond</keyword>
<keyword id="KW-1170">Fusion of virus membrane with host endosomal membrane</keyword>
<keyword id="KW-1168">Fusion of virus membrane with host membrane</keyword>
<keyword id="KW-0325">Glycoprotein</keyword>
<keyword id="KW-0347">Helicase</keyword>
<keyword id="KW-1035">Host cytoplasm</keyword>
<keyword id="KW-1038">Host endoplasmic reticulum</keyword>
<keyword id="KW-1043">Host membrane</keyword>
<keyword id="KW-1045">Host mitochondrion</keyword>
<keyword id="KW-1048">Host nucleus</keyword>
<keyword id="KW-0945">Host-virus interaction</keyword>
<keyword id="KW-0378">Hydrolase</keyword>
<keyword id="KW-1090">Inhibition of host innate immune response by virus</keyword>
<keyword id="KW-1114">Inhibition of host interferon signaling pathway by virus</keyword>
<keyword id="KW-1097">Inhibition of host MAVS by virus</keyword>
<keyword id="KW-1113">Inhibition of host RLR pathway by virus</keyword>
<keyword id="KW-1106">Inhibition of host STAT2 by virus</keyword>
<keyword id="KW-1112">Inhibition of host TYK2 by virus</keyword>
<keyword id="KW-0922">Interferon antiviral system evasion</keyword>
<keyword id="KW-0407">Ion channel</keyword>
<keyword id="KW-0406">Ion transport</keyword>
<keyword id="KW-0472">Membrane</keyword>
<keyword id="KW-0479">Metal-binding</keyword>
<keyword id="KW-0489">Methyltransferase</keyword>
<keyword id="KW-0506">mRNA capping</keyword>
<keyword id="KW-0507">mRNA processing</keyword>
<keyword id="KW-0511">Multifunctional enzyme</keyword>
<keyword id="KW-0547">Nucleotide-binding</keyword>
<keyword id="KW-0548">Nucleotidyltransferase</keyword>
<keyword id="KW-0597">Phosphoprotein</keyword>
<keyword id="KW-0645">Protease</keyword>
<keyword id="KW-0694">RNA-binding</keyword>
<keyword id="KW-0696">RNA-directed RNA polymerase</keyword>
<keyword id="KW-0949">S-adenosyl-L-methionine</keyword>
<keyword id="KW-0964">Secreted</keyword>
<keyword id="KW-0720">Serine protease</keyword>
<keyword id="KW-0941">Suppressor of RNA silencing</keyword>
<keyword id="KW-0804">Transcription</keyword>
<keyword id="KW-0805">Transcription regulation</keyword>
<keyword id="KW-0808">Transferase</keyword>
<keyword id="KW-0812">Transmembrane</keyword>
<keyword id="KW-1133">Transmembrane helix</keyword>
<keyword id="KW-0813">Transport</keyword>
<keyword id="KW-0832">Ubl conjugation</keyword>
<keyword id="KW-1161">Viral attachment to host cell</keyword>
<keyword id="KW-0261">Viral envelope protein</keyword>
<keyword id="KW-0899">Viral immunoevasion</keyword>
<keyword id="KW-1182">Viral ion channel</keyword>
<keyword id="KW-1162">Viral penetration into host cytoplasm</keyword>
<keyword id="KW-0693">Viral RNA replication</keyword>
<keyword id="KW-0946">Virion</keyword>
<keyword id="KW-1164">Virus endocytosis by host</keyword>
<keyword id="KW-1160">Virus entry into host cell</keyword>
<keyword id="KW-0862">Zinc</keyword>
<organismHost>
    <name type="scientific">Aedes aegypti</name>
    <name type="common">Yellowfever mosquito</name>
    <name type="synonym">Culex aegypti</name>
    <dbReference type="NCBI Taxonomy" id="7159"/>
</organismHost>
<organismHost>
    <name type="scientific">Aedes furcifer</name>
    <name type="common">Mosquito</name>
    <dbReference type="NCBI Taxonomy" id="299627"/>
</organismHost>
<organismHost>
    <name type="scientific">Aedes taylori</name>
    <name type="common">Mosquito</name>
    <dbReference type="NCBI Taxonomy" id="299628"/>
</organismHost>
<organismHost>
    <name type="scientific">Erythrocebus patas</name>
    <name type="common">Red guenon</name>
    <name type="synonym">Cercopithecus patas</name>
    <dbReference type="NCBI Taxonomy" id="9538"/>
</organismHost>
<organismHost>
    <name type="scientific">Homo sapiens</name>
    <name type="common">Human</name>
    <dbReference type="NCBI Taxonomy" id="9606"/>
</organismHost>
<proteinExistence type="evidence at protein level"/>
<sequence>MNDQRKKAKNTPFNMLKRERNRVSTVQQLTKRFSLGMLQGRGPLKLYMALVAFLRFLTIPPTAGILKRWGTIKKSKAINVLRGFRKEIGRMLNILNRRRRSAGMIIMLIPTVMAFHLTTRNGEPHMIVSRQEKGKSLLFKTEDGVNMCTLMAMDLGELCEDTITYKCPLLRQNEPEDIDCWCNSTSTWVTYGTCTTMGEHRRQKRSVALVPHVGMGLETRTETWMSSEGAWKHVQRIETWILRHPGFTMMAAILAYTIGTTHFQRALIFILLTAVTPSMTMRCIGMSNRDFVEGVSGGSWVDIVLEHGSCVTTMAKNKPTLDFELIKTEAKQPATLRKYCIEAKLTNTTTESRCPTQGEPSLNEEQDKRFVCKHSMVDRGWGNGCGLFGKGGIVTCAMFRCKKNMEGKVVQPENLEYTIVITPHSGEEHAVGNDTGKHGKEIKITPQSSTTEAELTGYGTVTMECSPRTGLDFNEMVLLQMENKAWLVHRQWFLDLPLPWLPGADTQGSNWIQKETLVTFKNPHAKKQDVVVLGSQEGAMHTALTGATEIQMSSGNLLFTGHLKCRLRMDKLQLKGMSYSMCTGKFKVVKEIAETQHGTIVIRVQYEGDGSPCKIPFEIMDLEKRHVLGRLITVNPIVTEKDSPVNIEAEPPFGDSYIIIGVEPGQLKLNWFKKGSSIGQMFETTMRGAKRMAILGDTAWDFGSLGGVFTSIGKALHQVFGAIYGAAFSGVSWTMKILIGVIITWIGMNSRSTSLSVTLVLVGIVTLYLGVMVQADSGCVVSWKNKELKCGSGIFITDNVHTWTEQYKFQPESPSKLASAIQKAHEEGICGIRSVTRLENLMWKQITPELNHILSENEVKLTIMTGDIKGIMQAGKRSLRPQPTELKYSWKTWGKAKMLSTESHNQTFLIDGPETAECPNTNRAWNSLEVEDYGFGVFTTNIWLKLKEKQDVFCDSKLMSAAIKDNRAVHADMGYWIESALNDTWKIEKASFIEVKNCHWPKSHTLWSNGVLESEMIIPKNLAGPVSQHNYRPGYHTQITGPWHLGKLEMDFDFCDGTTVVVTEDCGNRGPSLRTTTASGKLITEWCCRSCTLPPLRYRGEDGCWYGMEIRPLKEKEENLVNSLVTAGHGQVDNFSLGVLGMALFLEEMLRTRVGTKHAILLVAVSFVTLIIGNMSFRDLGRVMVMVGATMTDDIGMGVTYLALLAAFKVRPTFAAGLLLRKLTSKALMMTTIGIVLSSQSTTPETILELTDALALGMMVLKMVRNMEKYQLAVTIMAILCVPNAVILQNAWKVSCTILAVVSVSPLFLTSSQQKTDWIPLALTIKGLNPTAIFLTTLSRTSKKRSWPLNEAIMAVGMVSILASSLLKNDIPMTGPLVAGGPLTVCYVLTGRSADLELERAADVKWEDQAEISGSSPILSITISEDGSMSIKNEEEEQTLTILIRTGLLVISGLFPVSIPITAAAWYLWEVKKQRAGVLWDVPSPPPMGKAELEDGAYRIKQKGILGYSQIGAGVYKEGTFHTMWHVTRGAVLMHKGKRIEPSWADVKKDLISYGGGWKLEGEWKEGEEVQVLALEPGKNPRAVQTKPGLFKTNAGTIGAVSLDFSPGTSGSPIIDKKGKVVGLYGNGVVTRSGAYVSAIAQTEKSIEDNPEIEDDIFRKRRLTIMDLHPGAGKTKRYLPAIVREAIKRGLRTLILAPTRVVAAEMEEALRGLPIRYQTPAIRAEHTGREIVDLMCHATFTMRLLSPVRVPNYNLIIMDEAHFTDPASIAARGYISTRVEMGEAAGIFMTATPPGSRDPFPQSNAPIIDEEREIPERSWNSGHEWVTDFKGKTVWFVPSIKAGNDIAACLSKNGKKVIQLSRKTFDSEYAKTRTNDWDFVVTTDISEMGANFKAERVIDPRRCMKPVILTDGEERVILAGPMPVTHSSAAQRRGRIGRNPKNENDQYIYMGEPLENDEDCAHWKEAKMLLDNINTPEGIIPSMFEPEREKVDAIDGEYRLRGEARTTFVDLMRRGDLPVWLAYRVAAEGINYADRRWCFDGVKNNQILEENVEVEIWTKEGERKKLKPRWLDARIYSDPLALKEFKEFAAGRKSLTLNLITEMGRLPTFMTQKARDALDNLAVLHTAEAGGRAYNHALSELPETLETLLLLTLLATVTGGILLFLMSGRGIGKMTLGMCCIITASILLWYAQIQPHWIAASIILEFFLIVLLIPEPEKQRTPQDNQLTYVVIAILTVVAATMANEMGFLEKTKKDLGLGSIATQQPESNILDIDLRPASAWTLYAVATTFVTPMLRHSIENSSVNVSLTAIANQATVLMGLGKGWPLSKMDIGVPLLAIGCYSQVNPTTLTAALFLLVAHYAIIGPALQAKASREAQKRAAAGIMKNPTVDGITVIDLDPIPYDPKFEKQLGQVMLLVLCVTQVLMMRTTWALCEVLTLATGPISTLWEGNPGRFWNTTIAVSMANIFRGSYLAGAGLLFSIMKNTTNARRGTGNIGETLGEKWKSRLNALGKSEFQIYKKSGIQEVDRTLAKEGIKRGETDHHAVSRGSAKLRWFVERNMVTPEGKVVDLGCGRGGWSYYCGGLKNVREVKGLTKGGPGHEEPIPMSTYGWNLVRLQSGVDVFFIPPEKCDTLLCDIGESSPNPTVEAGRTLRVLNLVENWLNNNTQFCIKVLNPYMPSVIEKMEALQRKYGGALVRNPLSRNSTHEMYWVSNASGNIVSSVNMISRMLINRFTMRYKKATYEPDVDLGSGTRNIGIESEIPNLDIIGKRIEKIKQEHETSWHYDQDHPYKTWAYHGSYETKQTGSASSMVNGVFRLLTKPWDVVPMVTQMAMTDTTPFGQQRVFKEKVDTRTQEPKEGTKKLMKITAEWLWKELGKKKTPRMCTREEFTRKVRSNAALGAIFTDENKWKSAREAVEDSRFWELVDKERNLHLEGKCETCVYNIMGKREKKLGEFGKAKGSRAIWYMWLGARFLEFEALGFLNEDHWFSRENSLSGVEGEGLHKLGYILRDVSKKEGGAMYADDTAGWDTRITLEDLKNEAMVTNHMEGEHKKLAEAIFKLTYQNKVVRVQRPTPRGTVMDIISRRDQRGSGQVGTYGLNTFTNMEAQLIRQMEGEGVFKSIQHLTITEEIAVQNWLARVGRERLSRMAISGDDCVVKPLDDRLPSALTALNDTGKIRKDIQQWEPSRGWNDWTQVPFCSHHFHELIMKDGRVLVVPCRNQDELIGRARISQGAGWSLRETACLGKSYDQMWSLMYFHRRDLRLAANAICSAVPSHWVPTSRTTWSIHAKHEWMTTEDMLTVWNRVWIQENPWMEDKTPVESWEEIPYLGKREDQWCGSLIGLTSRATWAKNIQAAINQVRSLIGNEEYTDYMPSMKRFRREEEEAGVLW</sequence>
<evidence type="ECO:0000250" key="1">
    <source>
        <dbReference type="UniProtKB" id="P03314"/>
    </source>
</evidence>
<evidence type="ECO:0000250" key="2">
    <source>
        <dbReference type="UniProtKB" id="P14335"/>
    </source>
</evidence>
<evidence type="ECO:0000250" key="3">
    <source>
        <dbReference type="UniProtKB" id="P14336"/>
    </source>
</evidence>
<evidence type="ECO:0000250" key="4">
    <source>
        <dbReference type="UniProtKB" id="P14340"/>
    </source>
</evidence>
<evidence type="ECO:0000250" key="5">
    <source>
        <dbReference type="UniProtKB" id="P17763"/>
    </source>
</evidence>
<evidence type="ECO:0000250" key="6">
    <source>
        <dbReference type="UniProtKB" id="P29991"/>
    </source>
</evidence>
<evidence type="ECO:0000250" key="7">
    <source>
        <dbReference type="UniProtKB" id="Q32ZE1"/>
    </source>
</evidence>
<evidence type="ECO:0000250" key="8">
    <source>
        <dbReference type="UniProtKB" id="Q6YMS4"/>
    </source>
</evidence>
<evidence type="ECO:0000250" key="9">
    <source>
        <dbReference type="UniProtKB" id="Q9Q6P4"/>
    </source>
</evidence>
<evidence type="ECO:0000255" key="10"/>
<evidence type="ECO:0000255" key="11">
    <source>
        <dbReference type="PROSITE-ProRule" id="PRU00498"/>
    </source>
</evidence>
<evidence type="ECO:0000255" key="12">
    <source>
        <dbReference type="PROSITE-ProRule" id="PRU00539"/>
    </source>
</evidence>
<evidence type="ECO:0000255" key="13">
    <source>
        <dbReference type="PROSITE-ProRule" id="PRU00541"/>
    </source>
</evidence>
<evidence type="ECO:0000255" key="14">
    <source>
        <dbReference type="PROSITE-ProRule" id="PRU00859"/>
    </source>
</evidence>
<evidence type="ECO:0000255" key="15">
    <source>
        <dbReference type="PROSITE-ProRule" id="PRU00860"/>
    </source>
</evidence>
<evidence type="ECO:0000255" key="16">
    <source>
        <dbReference type="PROSITE-ProRule" id="PRU00924"/>
    </source>
</evidence>
<evidence type="ECO:0000269" key="17">
    <source>
    </source>
</evidence>
<evidence type="ECO:0000269" key="18">
    <source>
    </source>
</evidence>
<evidence type="ECO:0000269" key="19">
    <source>
    </source>
</evidence>
<evidence type="ECO:0000269" key="20">
    <source>
    </source>
</evidence>
<evidence type="ECO:0000269" key="21">
    <source>
    </source>
</evidence>
<evidence type="ECO:0000269" key="22">
    <source>
    </source>
</evidence>
<evidence type="ECO:0000269" key="23">
    <source>
    </source>
</evidence>
<evidence type="ECO:0000269" key="24">
    <source>
    </source>
</evidence>
<evidence type="ECO:0000269" key="25">
    <source>
    </source>
</evidence>
<evidence type="ECO:0000269" key="26">
    <source>
    </source>
</evidence>
<evidence type="ECO:0000269" key="27">
    <source>
    </source>
</evidence>
<evidence type="ECO:0000269" key="28">
    <source>
    </source>
</evidence>
<evidence type="ECO:0000269" key="29">
    <source>
    </source>
</evidence>
<evidence type="ECO:0000269" key="30">
    <source>
    </source>
</evidence>
<evidence type="ECO:0000269" key="31">
    <source>
    </source>
</evidence>
<evidence type="ECO:0000269" key="32">
    <source>
    </source>
</evidence>
<evidence type="ECO:0007829" key="33">
    <source>
        <dbReference type="PDB" id="6WY1"/>
    </source>
</evidence>
<evidence type="ECO:0007829" key="34">
    <source>
        <dbReference type="PDB" id="6ZQU"/>
    </source>
</evidence>
<evidence type="ECO:0007829" key="35">
    <source>
        <dbReference type="PDB" id="7K93"/>
    </source>
</evidence>
<comment type="function">
    <molecule>Capsid protein C</molecule>
    <text evidence="5 29">Plays a role in virus budding by binding to the cell membrane and gathering the viral RNA into a nucleocapsid that forms the core of a mature virus particle. During virus entry, may induce genome penetration into the host cytoplasm after hemifusion induced by the surface proteins. Can migrate to the cell nucleus where it modulates host functions. Overcomes the anti-viral effects of host EXOC1 by sequestering and degrading the latter through the proteasome degradation pathway (PubMed:23522008).</text>
</comment>
<comment type="function">
    <molecule>Capsid protein C</molecule>
    <text evidence="1">Inhibits RNA silencing by interfering with host Dicer.</text>
</comment>
<comment type="function">
    <molecule>Peptide pr</molecule>
    <text evidence="5">Prevents premature fusion activity of envelope proteins in trans-Golgi by binding to envelope protein E at pH6.0. After virion release in extracellular space, gets dissociated from E dimers.</text>
</comment>
<comment type="function">
    <molecule>Protein prM</molecule>
    <text evidence="5">Acts as a chaperone for envelope protein E during intracellular virion assembly by masking and inactivating envelope protein E fusion peptide. prM is the only viral peptide matured by host furin in the trans-Golgi network probably to avoid catastrophic activation of the viral fusion activity in acidic Golgi compartment prior to virion release. prM-E cleavage is inefficient, and many virions are only partially matured. These uncleaved prM would play a role in immune evasion.</text>
</comment>
<comment type="function">
    <molecule>Small envelope protein M</molecule>
    <text evidence="5">May play a role in virus budding. Exerts cytotoxic effects by activating a mitochondrial apoptotic pathway through M ectodomain. May display a viroporin activity.</text>
</comment>
<comment type="function">
    <molecule>Envelope protein E</molecule>
    <text evidence="5">Binds to host cell surface receptor and mediates fusion between viral and cellular membranes (PubMed:19272179). Envelope protein is synthesized in the endoplasmic reticulum in the form of heterodimer with protein prM (By similarity). They play a role in virion budding in the ER, and the newly formed immature particle is covered with 60 spikes composed of heterodimer between precursor prM and envelope protein E (By similarity). The virion is transported to the Golgi apparatus where the low pH causes dissociation of PrM-E heterodimers and formation of E homodimers (By similarity). prM-E cleavage is inefficient, and many virions are only partially matured. These uncleaved prM would play a role in immune evasion (By similarity).</text>
</comment>
<comment type="function">
    <molecule>Non-structural protein 1</molecule>
    <text evidence="9">Involved in immune evasion, pathogenesis and viral replication. Once cleaved off the polyprotein, is targeted to three destinations: the viral replication cycle, the plasma membrane and the extracellular compartment. Essential for viral replication. Required for formation of the replication complex and recruitment of other non-structural proteins to the ER-derived membrane structures. Excreted as a hexameric lipoparticle that plays a role against host immune response. Antagonizing the complement function. Binds to the host macrophages and dendritic cells. Inhibits signal transduction originating from Toll-like receptor 3 (TLR3).</text>
</comment>
<comment type="function">
    <molecule>Non-structural protein 1</molecule>
    <text evidence="5 23 32">Involved in immune evasion, pathogenesis and viral replication. Once cleaved off the polyprotein, is targeted to three destinations: the viral replication cycle, the plasma membrane and the extracellular compartment. Essential for viral replication. Required for formation of the replication complex and recruitment of other non-structural proteins to the ER-derived membrane structures. Excreted as a hexameric lipoparticle that plays a role against host immune response. Antagonizing the complement function. Binds to the host macrophages and dendritic cells. Inhibits signal transduction originating from Toll-like receptor 3 (TLR3) (By similarity). Mediates complement activation, which may contribute to the pathogenesis of the vascular leakage that occurs in severe dengue disease (PubMed:16544248). Activates autophagy through the AMPK/ERK/mTOR signaling pathway. Mechanistically, acts as the assembly platform for STK11-AMPK interactions and promotes STK11-AMPK interactions. In turn, promotes phosphorylation of the AMPK kinase structural domain and activates AMPK, thereby positively regulating the AMPK/ERK/mTOR signaling pathway and inducing autophagy (PubMed:37821951).</text>
</comment>
<comment type="function">
    <molecule>Non-structural protein 2A</molecule>
    <text evidence="5">Component of the viral RNA replication complex that functions in virion assembly and antagonizes the host immune response.</text>
</comment>
<comment type="function">
    <molecule>Serine protease subunit NS2B</molecule>
    <text evidence="5 14">Required cofactor for the serine protease function of NS3. May have membrane-destabilizing activity and form viroporins (By similarity).</text>
</comment>
<comment type="function">
    <molecule>Serine protease NS3</molecule>
    <text evidence="15">Displays three enzymatic activities: serine protease, NTPase and RNA helicase. NS3 serine protease, in association with NS2B, performs its autocleavage and cleaves the polyprotein at dibasic sites in the cytoplasm: C-prM, NS2A-NS2B, NS2B-NS3, NS3-NS4A, NS4A-2K and NS4B-NS5. NS3 RNA helicase binds RNA and unwinds dsRNA in the 3' to 5' direction.</text>
</comment>
<comment type="function">
    <molecule>Non-structural protein 4A</molecule>
    <text evidence="5 6 9">Regulates the ATPase activity of the NS3 helicase activity. NS4A allows NS3 helicase to conserve energy during unwinding. Plays a role in the inhibition of the host innate immune response. Interacts with host MAVS and thereby prevents the interaction between RIGI and MAVS. In turn, IFN-beta production is impaired. Interacts with host AUP1 which mediates induction of lipophagy in host cells and facilitates production of virus progeny particles (By similarity).</text>
</comment>
<comment type="function">
    <molecule>Peptide 2k</molecule>
    <text evidence="22">Functions as a signal peptide for NS4B and is required for the interferon antagonism activity of the latter.</text>
</comment>
<comment type="function">
    <molecule>Non-structural protein 4B</molecule>
    <text evidence="9 22">Induces the formation of ER-derived membrane vesicles where the viral replication takes place. Inhibits interferon (IFN)-induced host STAT1 phosphorylation and nuclear translocation, thereby preventing the establishment of cellular antiviral state by blocking the IFN-alpha/beta pathway (PubMed:15956546).</text>
</comment>
<comment type="function">
    <molecule>RNA-directed RNA polymerase NS5</molecule>
    <text evidence="5 21 26 27 31">Replicates the viral (+) and (-) RNA genome, and performs the capping of genomes in the cytoplasm (By similarity). NS5 methylates viral RNA cap at guanine N-7 and ribose 2'-O positions (PubMed:19850911). Besides its role in RNA genome replication, also prevents the establishment of cellular antiviral state by blocking the interferon-alpha/beta (IFN-alpha/beta) signaling pathway (PubMed:15944325). Inhibits host TYK2 and STAT2 phosphorylation, thereby preventing activation of JAK-STAT signaling pathway (PubMed:19754307). May reduce immune responses by preventing the recruitment of the host PAF1 complex to interferon-responsive genes (PubMed:30550790).</text>
</comment>
<comment type="catalytic activity">
    <reaction>
        <text>Selective hydrolysis of -Xaa-Xaa-|-Yaa- bonds in which each of the Xaa can be either Arg or Lys and Yaa can be either Ser or Ala.</text>
        <dbReference type="EC" id="3.4.21.91"/>
    </reaction>
</comment>
<comment type="catalytic activity">
    <reaction evidence="12">
        <text>RNA(n) + a ribonucleoside 5'-triphosphate = RNA(n+1) + diphosphate</text>
        <dbReference type="Rhea" id="RHEA:21248"/>
        <dbReference type="Rhea" id="RHEA-COMP:14527"/>
        <dbReference type="Rhea" id="RHEA-COMP:17342"/>
        <dbReference type="ChEBI" id="CHEBI:33019"/>
        <dbReference type="ChEBI" id="CHEBI:61557"/>
        <dbReference type="ChEBI" id="CHEBI:140395"/>
        <dbReference type="EC" id="2.7.7.48"/>
    </reaction>
</comment>
<comment type="catalytic activity">
    <reaction>
        <text>a ribonucleoside 5'-triphosphate + H2O = a ribonucleoside 5'-diphosphate + phosphate + H(+)</text>
        <dbReference type="Rhea" id="RHEA:23680"/>
        <dbReference type="ChEBI" id="CHEBI:15377"/>
        <dbReference type="ChEBI" id="CHEBI:15378"/>
        <dbReference type="ChEBI" id="CHEBI:43474"/>
        <dbReference type="ChEBI" id="CHEBI:57930"/>
        <dbReference type="ChEBI" id="CHEBI:61557"/>
        <dbReference type="EC" id="3.6.1.15"/>
    </reaction>
</comment>
<comment type="catalytic activity">
    <reaction>
        <text>ATP + H2O = ADP + phosphate + H(+)</text>
        <dbReference type="Rhea" id="RHEA:13065"/>
        <dbReference type="ChEBI" id="CHEBI:15377"/>
        <dbReference type="ChEBI" id="CHEBI:15378"/>
        <dbReference type="ChEBI" id="CHEBI:30616"/>
        <dbReference type="ChEBI" id="CHEBI:43474"/>
        <dbReference type="ChEBI" id="CHEBI:456216"/>
        <dbReference type="EC" id="3.6.4.13"/>
    </reaction>
</comment>
<comment type="catalytic activity">
    <reaction evidence="16">
        <text>a 5'-end (5'-triphosphoguanosine)-ribonucleoside in mRNA + S-adenosyl-L-methionine = a 5'-end (N(7)-methyl 5'-triphosphoguanosine)-ribonucleoside in mRNA + S-adenosyl-L-homocysteine</text>
        <dbReference type="Rhea" id="RHEA:67008"/>
        <dbReference type="Rhea" id="RHEA-COMP:17166"/>
        <dbReference type="Rhea" id="RHEA-COMP:17167"/>
        <dbReference type="ChEBI" id="CHEBI:57856"/>
        <dbReference type="ChEBI" id="CHEBI:59789"/>
        <dbReference type="ChEBI" id="CHEBI:156461"/>
        <dbReference type="ChEBI" id="CHEBI:167617"/>
        <dbReference type="EC" id="2.1.1.56"/>
    </reaction>
</comment>
<comment type="catalytic activity">
    <reaction evidence="16">
        <text>a 5'-end (N(7)-methyl 5'-triphosphoguanosine)-ribonucleoside in mRNA + S-adenosyl-L-methionine = a 5'-end (N(7)-methyl 5'-triphosphoguanosine)-(2'-O-methyl-ribonucleoside) in mRNA + S-adenosyl-L-homocysteine + H(+)</text>
        <dbReference type="Rhea" id="RHEA:67020"/>
        <dbReference type="Rhea" id="RHEA-COMP:17167"/>
        <dbReference type="Rhea" id="RHEA-COMP:17168"/>
        <dbReference type="ChEBI" id="CHEBI:15378"/>
        <dbReference type="ChEBI" id="CHEBI:57856"/>
        <dbReference type="ChEBI" id="CHEBI:59789"/>
        <dbReference type="ChEBI" id="CHEBI:156461"/>
        <dbReference type="ChEBI" id="CHEBI:167609"/>
        <dbReference type="EC" id="2.1.1.57"/>
    </reaction>
</comment>
<comment type="subunit">
    <molecule>Capsid protein C</molecule>
    <text evidence="17 20 28 29">Homodimer (PubMed:12768036, PubMed:15269372). Interacts (via N-terminus) with host EXOC1 (via C-terminus); this interaction results in EXOC1 degradation through the proteasome degradation pathway (PubMed:19889084, PubMed:23522008).</text>
</comment>
<comment type="subunit">
    <molecule>Protein prM</molecule>
    <text evidence="5">Forms heterodimers with envelope protein E in the endoplasmic reticulum and Golgi (By similarity).</text>
</comment>
<comment type="subunit">
    <molecule>Envelope protein E</molecule>
    <text evidence="5">Homodimer; in the endoplasmic reticulum and Golgi. Interacts with protein prM. Interacts with non-structural protein 1 (By similarity).</text>
</comment>
<comment type="subunit">
    <molecule>Non-structural protein 1</molecule>
    <text evidence="5 32">Homodimer; Homohexamer when secreted. Interacts with envelope protein E (By similarity). Interacts with host PRKAA1 (PubMed:37821951).</text>
</comment>
<comment type="subunit">
    <molecule>Non-structural protein 2A</molecule>
    <text evidence="5">Interacts (via N-terminus) with serine protease NS3 (By similarity).</text>
</comment>
<comment type="subunit">
    <molecule>Serine protease subunit NS2B</molecule>
    <text evidence="5">Forms a heterodimer with serine protease NS3. May form homooligomers (By similarity).</text>
</comment>
<comment type="subunit">
    <molecule>Serine protease NS3</molecule>
    <text evidence="5 27">Forms a heterodimer with NS2B (By similarity). Interacts with NS4B (By similarity). Interacts with unphosphorylated RNA-directed RNA polymerase NS5; this interaction stimulates RNA-directed RNA polymerase NS5 guanylyltransferase activity (PubMed:19850911). Interacts with host SHFL (By similarity).</text>
</comment>
<comment type="subunit">
    <molecule>Non-structural protein 4A</molecule>
    <text evidence="5 6 31">Interacts with host MAVS; this interaction inhibits the synthesis of IFN-beta (By similarity). Interacts with host SHFL (By similarity). Interacts with host AUP1; the interaction occurs in the presence of Dengue virus NS4B and induces lipophagy which facilitates production of virus progeny particles (By similarity). May interact with host SRPRA and SEC61G (PubMed:30550790).</text>
</comment>
<comment type="subunit">
    <molecule>Non-structural protein 4B</molecule>
    <text evidence="5">Interacts with serine protease NS3.</text>
</comment>
<comment type="subunit">
    <molecule>RNA-directed RNA polymerase NS5</molecule>
    <text evidence="5 26 27 31">Homodimer (By similarity). Interacts with host STAT2; this interaction inhibits the phosphorylation of the latter, and, when all viral proteins are present (polyprotein), targets STAT2 for degradation (PubMed:19754307, PubMed:30550790). Interacts with serine protease NS3 (PubMed:19850911). Interacts with host PAF1 complex; the interaction may prevent the recruitment of the PAF1 complex to interferon-responsive genes, and thus reduces the immune response (PubMed:30550790).</text>
</comment>
<comment type="subcellular location">
    <molecule>Capsid protein C</molecule>
    <subcellularLocation>
        <location evidence="5">Virion</location>
    </subcellularLocation>
    <subcellularLocation>
        <location evidence="5">Host nucleus</location>
    </subcellularLocation>
    <subcellularLocation>
        <location evidence="28">Host cytoplasm</location>
    </subcellularLocation>
    <subcellularLocation>
        <location evidence="28">Host cytoplasm</location>
        <location evidence="28">Host perinuclear region</location>
    </subcellularLocation>
</comment>
<comment type="subcellular location">
    <molecule>Peptide pr</molecule>
    <subcellularLocation>
        <location evidence="5">Secreted</location>
    </subcellularLocation>
</comment>
<comment type="subcellular location">
    <molecule>Small envelope protein M</molecule>
    <subcellularLocation>
        <location evidence="5">Virion membrane</location>
        <topology evidence="10">Multi-pass membrane protein</topology>
    </subcellularLocation>
    <subcellularLocation>
        <location evidence="5">Host endoplasmic reticulum membrane</location>
        <topology evidence="10">Multi-pass membrane protein</topology>
    </subcellularLocation>
</comment>
<comment type="subcellular location">
    <molecule>Envelope protein E</molecule>
    <subcellularLocation>
        <location evidence="5">Virion membrane</location>
        <topology evidence="10">Multi-pass membrane protein</topology>
    </subcellularLocation>
    <subcellularLocation>
        <location evidence="5">Host endoplasmic reticulum membrane</location>
        <topology evidence="10">Multi-pass membrane protein</topology>
    </subcellularLocation>
</comment>
<comment type="subcellular location">
    <molecule>Non-structural protein 1</molecule>
    <subcellularLocation>
        <location evidence="5">Secreted</location>
    </subcellularLocation>
    <subcellularLocation>
        <location evidence="32">Host cytoplasm</location>
    </subcellularLocation>
    <subcellularLocation>
        <location>Host endoplasmic reticulum membrane</location>
        <topology>Peripheral membrane protein</topology>
        <orientation evidence="5">Lumenal side</orientation>
    </subcellularLocation>
    <text evidence="9">Located in RE-derived vesicles hosting the replication complex.</text>
</comment>
<comment type="subcellular location">
    <molecule>Non-structural protein 2A</molecule>
    <subcellularLocation>
        <location evidence="5">Host endoplasmic reticulum membrane</location>
        <topology evidence="5">Multi-pass membrane protein</topology>
    </subcellularLocation>
</comment>
<comment type="subcellular location">
    <molecule>Serine protease subunit NS2B</molecule>
    <subcellularLocation>
        <location>Host endoplasmic reticulum membrane</location>
        <topology evidence="5">Multi-pass membrane protein</topology>
    </subcellularLocation>
</comment>
<comment type="subcellular location">
    <molecule>Serine protease NS3</molecule>
    <subcellularLocation>
        <location evidence="15">Host endoplasmic reticulum membrane</location>
        <topology evidence="15">Peripheral membrane protein</topology>
        <orientation evidence="15">Cytoplasmic side</orientation>
    </subcellularLocation>
    <subcellularLocation>
        <location evidence="24">Host nucleus</location>
    </subcellularLocation>
    <text evidence="15">Remains non-covalently associated to serine protease subunit NS2B.</text>
</comment>
<comment type="subcellular location">
    <molecule>Non-structural protein 4A</molecule>
    <subcellularLocation>
        <location evidence="31">Host endoplasmic reticulum membrane</location>
        <topology evidence="5">Multi-pass membrane protein</topology>
    </subcellularLocation>
    <subcellularLocation>
        <location evidence="5">Host mitochondrion</location>
    </subcellularLocation>
    <text evidence="5">Located in RE-associated vesicles hosting the replication complex. Interacts with host MAVS in the mitochondrion-associated endoplasmic reticulum membranes.</text>
</comment>
<comment type="subcellular location">
    <molecule>Non-structural protein 4B</molecule>
    <subcellularLocation>
        <location evidence="5">Host endoplasmic reticulum membrane</location>
        <topology evidence="5">Multi-pass membrane protein</topology>
    </subcellularLocation>
    <text evidence="9">Located in RE-derived vesicles hosting the replication complex.</text>
</comment>
<comment type="subcellular location">
    <molecule>RNA-directed RNA polymerase NS5</molecule>
    <subcellularLocation>
        <location evidence="5">Host endoplasmic reticulum membrane</location>
        <topology evidence="5">Peripheral membrane protein</topology>
        <orientation evidence="5">Cytoplasmic side</orientation>
    </subcellularLocation>
    <subcellularLocation>
        <location evidence="24 31">Host nucleus</location>
    </subcellularLocation>
    <text evidence="5">Located in RE-associated vesicles hosting the replication complex. NS5 protein is mainly localized in the nucleus rather than in ER vesicles, especially in the DENV 2, 3, 4 serotypes.</text>
</comment>
<comment type="domain">
    <text evidence="5">The transmembrane domains of the small envelope protein M and envelope protein E contain an endoplasmic reticulum retention signal.</text>
</comment>
<comment type="PTM">
    <molecule>Genome polyprotein</molecule>
    <text evidence="5 25">Specific enzymatic cleavages in vivo yield mature proteins. Cleavages in the lumen of endoplasmic reticulum are performed by host signal peptidase, whereas cleavages in the cytoplasmic side are performed by serine protease NS3. Signal cleavage at the 2K-4B site requires a prior NS3 protease-mediated cleavage at the 4A-2K site.</text>
</comment>
<comment type="PTM">
    <molecule>Protein prM</molecule>
    <text evidence="5 18">Cleaved in post-Golgi vesicles by a host furin, releasing the mature small envelope protein M, and peptide pr. This cleavage is incomplete as up to 30% of viral particles still carry uncleaved prM.</text>
</comment>
<comment type="PTM">
    <molecule>Envelope protein E</molecule>
    <text evidence="5">N-glycosylated.</text>
</comment>
<comment type="PTM">
    <molecule>Non-structural protein 1</molecule>
    <text evidence="5">N-glycosylated. The excreted form is glycosylated and this is required for efficient secretion of the protein from infected cells.</text>
</comment>
<comment type="PTM">
    <molecule>Serine protease NS3</molecule>
    <text evidence="7">Acetylated by host KAT5. Acetylation modulates NS3 RNA-binding and unwinding activities and plays an important positive role for viral replication.</text>
</comment>
<comment type="PTM">
    <molecule>RNA-directed RNA polymerase NS5</molecule>
    <text evidence="30">Sumoylation of RNA-directed RNA polymerase NS5 increases NS5 protein stability allowing proper viral RNA replication.</text>
</comment>
<comment type="PTM">
    <molecule>RNA-directed RNA polymerase NS5</molecule>
    <text evidence="5">Phosphorylated on serines residues. This phosphorylation may trigger NS5 nuclear localization.</text>
</comment>
<comment type="similarity">
    <text evidence="16">In the N-terminal section; belongs to the class I-like SAM-binding methyltransferase superfamily. mRNA cap 0-1 NS5-type methyltransferase family.</text>
</comment>
<dbReference type="EC" id="3.4.21.91"/>
<dbReference type="EC" id="3.6.1.15" evidence="9"/>
<dbReference type="EC" id="3.6.4.13" evidence="9"/>
<dbReference type="EC" id="2.1.1.56" evidence="16"/>
<dbReference type="EC" id="2.1.1.57" evidence="16"/>
<dbReference type="EC" id="2.7.7.48" evidence="12"/>
<dbReference type="EMBL" id="M84727">
    <property type="protein sequence ID" value="AAA73185.1"/>
    <property type="molecule type" value="Genomic_RNA"/>
</dbReference>
<dbReference type="PIR" id="A42451">
    <property type="entry name" value="GNWV16"/>
</dbReference>
<dbReference type="PDB" id="2R69">
    <property type="method" value="X-ray"/>
    <property type="resolution" value="3.80 A"/>
    <property type="chains" value="A=578-674"/>
</dbReference>
<dbReference type="PDB" id="4O6B">
    <property type="method" value="X-ray"/>
    <property type="resolution" value="3.00 A"/>
    <property type="chains" value="A/B=775-1127"/>
</dbReference>
<dbReference type="PDB" id="6WER">
    <property type="method" value="X-ray"/>
    <property type="resolution" value="3.96 A"/>
    <property type="chains" value="A/B=775-1127"/>
</dbReference>
<dbReference type="PDB" id="6WY1">
    <property type="method" value="X-ray"/>
    <property type="resolution" value="3.42 A"/>
    <property type="chains" value="A=281-677"/>
</dbReference>
<dbReference type="PDB" id="6ZQU">
    <property type="method" value="EM"/>
    <property type="resolution" value="3.10 A"/>
    <property type="chains" value="A/C/E=281-775"/>
</dbReference>
<dbReference type="PDB" id="7K93">
    <property type="method" value="X-ray"/>
    <property type="resolution" value="2.89 A"/>
    <property type="chains" value="A/B/C/D=775-1127"/>
</dbReference>
<dbReference type="PDBsum" id="2R69"/>
<dbReference type="PDBsum" id="4O6B"/>
<dbReference type="PDBsum" id="6WER"/>
<dbReference type="PDBsum" id="6WY1"/>
<dbReference type="PDBsum" id="6ZQU"/>
<dbReference type="PDBsum" id="7K93"/>
<dbReference type="BMRB" id="P29990"/>
<dbReference type="SMR" id="P29990"/>
<dbReference type="IntAct" id="P29990">
    <property type="interactions" value="4"/>
</dbReference>
<dbReference type="MINT" id="P29990"/>
<dbReference type="BindingDB" id="P29990"/>
<dbReference type="ChEMBL" id="CHEMBL5980"/>
<dbReference type="DrugCentral" id="P29990"/>
<dbReference type="MEROPS" id="S07.001"/>
<dbReference type="iPTMnet" id="P29990"/>
<dbReference type="ABCD" id="P29990">
    <property type="antibodies" value="2 sequenced antibodies"/>
</dbReference>
<dbReference type="BRENDA" id="2.7.7.50">
    <property type="organism ID" value="1867"/>
</dbReference>
<dbReference type="BRENDA" id="3.4.21.91">
    <property type="organism ID" value="8413"/>
</dbReference>
<dbReference type="EvolutionaryTrace" id="P29990"/>
<dbReference type="PRO" id="PR:P29990"/>
<dbReference type="Proteomes" id="UP000002324">
    <property type="component" value="Genome"/>
</dbReference>
<dbReference type="GO" id="GO:0005576">
    <property type="term" value="C:extracellular region"/>
    <property type="evidence" value="ECO:0007669"/>
    <property type="project" value="UniProtKB-SubCell"/>
</dbReference>
<dbReference type="GO" id="GO:0044167">
    <property type="term" value="C:host cell endoplasmic reticulum membrane"/>
    <property type="evidence" value="ECO:0007669"/>
    <property type="project" value="UniProtKB-SubCell"/>
</dbReference>
<dbReference type="GO" id="GO:0033650">
    <property type="term" value="C:host cell mitochondrion"/>
    <property type="evidence" value="ECO:0007669"/>
    <property type="project" value="UniProtKB-SubCell"/>
</dbReference>
<dbReference type="GO" id="GO:0042025">
    <property type="term" value="C:host cell nucleus"/>
    <property type="evidence" value="ECO:0007669"/>
    <property type="project" value="UniProtKB-SubCell"/>
</dbReference>
<dbReference type="GO" id="GO:0044220">
    <property type="term" value="C:host cell perinuclear region of cytoplasm"/>
    <property type="evidence" value="ECO:0007669"/>
    <property type="project" value="UniProtKB-SubCell"/>
</dbReference>
<dbReference type="GO" id="GO:0016020">
    <property type="term" value="C:membrane"/>
    <property type="evidence" value="ECO:0007669"/>
    <property type="project" value="UniProtKB-KW"/>
</dbReference>
<dbReference type="GO" id="GO:0019028">
    <property type="term" value="C:viral capsid"/>
    <property type="evidence" value="ECO:0007669"/>
    <property type="project" value="UniProtKB-KW"/>
</dbReference>
<dbReference type="GO" id="GO:0019031">
    <property type="term" value="C:viral envelope"/>
    <property type="evidence" value="ECO:0007669"/>
    <property type="project" value="UniProtKB-KW"/>
</dbReference>
<dbReference type="GO" id="GO:0055036">
    <property type="term" value="C:virion membrane"/>
    <property type="evidence" value="ECO:0007669"/>
    <property type="project" value="UniProtKB-SubCell"/>
</dbReference>
<dbReference type="GO" id="GO:0005524">
    <property type="term" value="F:ATP binding"/>
    <property type="evidence" value="ECO:0007669"/>
    <property type="project" value="UniProtKB-KW"/>
</dbReference>
<dbReference type="GO" id="GO:0016887">
    <property type="term" value="F:ATP hydrolysis activity"/>
    <property type="evidence" value="ECO:0007669"/>
    <property type="project" value="RHEA"/>
</dbReference>
<dbReference type="GO" id="GO:0015267">
    <property type="term" value="F:channel activity"/>
    <property type="evidence" value="ECO:0007669"/>
    <property type="project" value="UniProtKB-KW"/>
</dbReference>
<dbReference type="GO" id="GO:0003725">
    <property type="term" value="F:double-stranded RNA binding"/>
    <property type="evidence" value="ECO:0007669"/>
    <property type="project" value="InterPro"/>
</dbReference>
<dbReference type="GO" id="GO:0046872">
    <property type="term" value="F:metal ion binding"/>
    <property type="evidence" value="ECO:0007669"/>
    <property type="project" value="UniProtKB-KW"/>
</dbReference>
<dbReference type="GO" id="GO:0004483">
    <property type="term" value="F:mRNA (nucleoside-2'-O-)-methyltransferase activity"/>
    <property type="evidence" value="ECO:0007669"/>
    <property type="project" value="UniProtKB-EC"/>
</dbReference>
<dbReference type="GO" id="GO:0004482">
    <property type="term" value="F:mRNA 5'-cap (guanine-N7-)-methyltransferase activity"/>
    <property type="evidence" value="ECO:0007669"/>
    <property type="project" value="UniProtKB-EC"/>
</dbReference>
<dbReference type="GO" id="GO:0046983">
    <property type="term" value="F:protein dimerization activity"/>
    <property type="evidence" value="ECO:0007669"/>
    <property type="project" value="InterPro"/>
</dbReference>
<dbReference type="GO" id="GO:0003724">
    <property type="term" value="F:RNA helicase activity"/>
    <property type="evidence" value="ECO:0007669"/>
    <property type="project" value="UniProtKB-EC"/>
</dbReference>
<dbReference type="GO" id="GO:0003968">
    <property type="term" value="F:RNA-directed RNA polymerase activity"/>
    <property type="evidence" value="ECO:0007669"/>
    <property type="project" value="UniProtKB-KW"/>
</dbReference>
<dbReference type="GO" id="GO:0004252">
    <property type="term" value="F:serine-type endopeptidase activity"/>
    <property type="evidence" value="ECO:0007669"/>
    <property type="project" value="InterPro"/>
</dbReference>
<dbReference type="GO" id="GO:0005198">
    <property type="term" value="F:structural molecule activity"/>
    <property type="evidence" value="ECO:0007669"/>
    <property type="project" value="InterPro"/>
</dbReference>
<dbReference type="GO" id="GO:0075512">
    <property type="term" value="P:clathrin-dependent endocytosis of virus by host cell"/>
    <property type="evidence" value="ECO:0007669"/>
    <property type="project" value="UniProtKB-KW"/>
</dbReference>
<dbReference type="GO" id="GO:0039654">
    <property type="term" value="P:fusion of virus membrane with host endosome membrane"/>
    <property type="evidence" value="ECO:0007669"/>
    <property type="project" value="UniProtKB-KW"/>
</dbReference>
<dbReference type="GO" id="GO:0034220">
    <property type="term" value="P:monoatomic ion transmembrane transport"/>
    <property type="evidence" value="ECO:0007669"/>
    <property type="project" value="UniProtKB-KW"/>
</dbReference>
<dbReference type="GO" id="GO:0006508">
    <property type="term" value="P:proteolysis"/>
    <property type="evidence" value="ECO:0007669"/>
    <property type="project" value="UniProtKB-KW"/>
</dbReference>
<dbReference type="GO" id="GO:0039520">
    <property type="term" value="P:symbiont-mediated activation of host autophagy"/>
    <property type="evidence" value="ECO:0007669"/>
    <property type="project" value="UniProtKB-KW"/>
</dbReference>
<dbReference type="GO" id="GO:0039545">
    <property type="term" value="P:symbiont-mediated suppression of host cytoplasmic pattern recognition receptor signaling pathway via inhibition of MAVS activity"/>
    <property type="evidence" value="ECO:0007669"/>
    <property type="project" value="UniProtKB-KW"/>
</dbReference>
<dbReference type="GO" id="GO:0039574">
    <property type="term" value="P:symbiont-mediated suppression of host JAK-STAT cascade via inhibition of host TYK2 activity"/>
    <property type="evidence" value="ECO:0007669"/>
    <property type="project" value="UniProtKB-KW"/>
</dbReference>
<dbReference type="GO" id="GO:0039564">
    <property type="term" value="P:symbiont-mediated suppression of host JAK-STAT cascade via inhibition of STAT2 activity"/>
    <property type="evidence" value="ECO:0007669"/>
    <property type="project" value="UniProtKB-KW"/>
</dbReference>
<dbReference type="GO" id="GO:0039502">
    <property type="term" value="P:symbiont-mediated suppression of host type I interferon-mediated signaling pathway"/>
    <property type="evidence" value="ECO:0007669"/>
    <property type="project" value="UniProtKB-KW"/>
</dbReference>
<dbReference type="GO" id="GO:0039694">
    <property type="term" value="P:viral RNA genome replication"/>
    <property type="evidence" value="ECO:0007669"/>
    <property type="project" value="InterPro"/>
</dbReference>
<dbReference type="GO" id="GO:0019062">
    <property type="term" value="P:virion attachment to host cell"/>
    <property type="evidence" value="ECO:0007669"/>
    <property type="project" value="UniProtKB-KW"/>
</dbReference>
<dbReference type="CDD" id="cd20761">
    <property type="entry name" value="capping_2-OMTase_Flaviviridae"/>
    <property type="match status" value="1"/>
</dbReference>
<dbReference type="CDD" id="cd17931">
    <property type="entry name" value="DEXHc_viral_Ns3"/>
    <property type="match status" value="1"/>
</dbReference>
<dbReference type="CDD" id="cd12149">
    <property type="entry name" value="Flavi_E_C"/>
    <property type="match status" value="1"/>
</dbReference>
<dbReference type="CDD" id="cd17038">
    <property type="entry name" value="Flavi_M"/>
    <property type="match status" value="1"/>
</dbReference>
<dbReference type="CDD" id="cd23204">
    <property type="entry name" value="Flavivirus_RdRp"/>
    <property type="match status" value="1"/>
</dbReference>
<dbReference type="CDD" id="cd18806">
    <property type="entry name" value="SF2_C_viral"/>
    <property type="match status" value="1"/>
</dbReference>
<dbReference type="FunFam" id="1.20.1280.260:FF:000001">
    <property type="entry name" value="Envelope glycoprotein"/>
    <property type="match status" value="1"/>
</dbReference>
<dbReference type="FunFam" id="2.60.40.350:FF:000001">
    <property type="entry name" value="Envelope glycoprotein"/>
    <property type="match status" value="1"/>
</dbReference>
<dbReference type="FunFam" id="1.10.10.930:FF:000001">
    <property type="entry name" value="Genome polyprotein"/>
    <property type="match status" value="1"/>
</dbReference>
<dbReference type="FunFam" id="2.60.260.50:FF:000001">
    <property type="entry name" value="Genome polyprotein"/>
    <property type="match status" value="1"/>
</dbReference>
<dbReference type="FunFam" id="3.30.70.2840:FF:000001">
    <property type="entry name" value="Genome polyprotein"/>
    <property type="match status" value="1"/>
</dbReference>
<dbReference type="FunFam" id="3.30.70.2840:FF:000002">
    <property type="entry name" value="Genome polyprotein"/>
    <property type="match status" value="1"/>
</dbReference>
<dbReference type="FunFam" id="3.40.50.150:FF:000105">
    <property type="entry name" value="Genome polyprotein"/>
    <property type="match status" value="1"/>
</dbReference>
<dbReference type="FunFam" id="3.40.50.300:FF:000763">
    <property type="entry name" value="Genome polyprotein"/>
    <property type="match status" value="1"/>
</dbReference>
<dbReference type="Gene3D" id="1.10.10.930">
    <property type="match status" value="1"/>
</dbReference>
<dbReference type="Gene3D" id="1.10.260.90">
    <property type="match status" value="1"/>
</dbReference>
<dbReference type="Gene3D" id="1.20.1280.260">
    <property type="match status" value="1"/>
</dbReference>
<dbReference type="Gene3D" id="2.40.10.120">
    <property type="match status" value="2"/>
</dbReference>
<dbReference type="Gene3D" id="2.60.40.350">
    <property type="match status" value="1"/>
</dbReference>
<dbReference type="Gene3D" id="1.10.8.970">
    <property type="entry name" value="Flavivirus envelope glycoprotein M-like"/>
    <property type="match status" value="1"/>
</dbReference>
<dbReference type="Gene3D" id="2.60.260.50">
    <property type="entry name" value="Flavivirus polyprotein propeptide domain"/>
    <property type="match status" value="1"/>
</dbReference>
<dbReference type="Gene3D" id="3.30.70.2840">
    <property type="entry name" value="Flavivirus RNA-directed RNA polymerase, thumb domain"/>
    <property type="match status" value="3"/>
</dbReference>
<dbReference type="Gene3D" id="3.40.50.300">
    <property type="entry name" value="P-loop containing nucleotide triphosphate hydrolases"/>
    <property type="match status" value="2"/>
</dbReference>
<dbReference type="Gene3D" id="2.60.98.10">
    <property type="entry name" value="Tick-borne Encephalitis virus Glycoprotein, domain 1"/>
    <property type="match status" value="1"/>
</dbReference>
<dbReference type="Gene3D" id="2.40.10.10">
    <property type="entry name" value="Trypsin-like serine proteases"/>
    <property type="match status" value="1"/>
</dbReference>
<dbReference type="Gene3D" id="3.40.50.150">
    <property type="entry name" value="Vaccinia Virus protein VP39"/>
    <property type="match status" value="1"/>
</dbReference>
<dbReference type="Gene3D" id="3.30.67.10">
    <property type="entry name" value="Viral Envelope Glycoprotein, domain 2"/>
    <property type="match status" value="1"/>
</dbReference>
<dbReference type="Gene3D" id="3.30.387.10">
    <property type="entry name" value="Viral Envelope Glycoprotein, domain 3"/>
    <property type="match status" value="1"/>
</dbReference>
<dbReference type="InterPro" id="IPR043502">
    <property type="entry name" value="DNA/RNA_pol_sf"/>
</dbReference>
<dbReference type="InterPro" id="IPR000069">
    <property type="entry name" value="Env_glycoprot_M_flavivir"/>
</dbReference>
<dbReference type="InterPro" id="IPR038302">
    <property type="entry name" value="Env_glycoprot_M_sf_flavivir"/>
</dbReference>
<dbReference type="InterPro" id="IPR013755">
    <property type="entry name" value="Flav_gly_cen_dom_subdom1"/>
</dbReference>
<dbReference type="InterPro" id="IPR001122">
    <property type="entry name" value="Flavi_capsidC"/>
</dbReference>
<dbReference type="InterPro" id="IPR037172">
    <property type="entry name" value="Flavi_capsidC_sf"/>
</dbReference>
<dbReference type="InterPro" id="IPR011492">
    <property type="entry name" value="Flavi_DEAD"/>
</dbReference>
<dbReference type="InterPro" id="IPR027287">
    <property type="entry name" value="Flavi_E_Ig-like"/>
</dbReference>
<dbReference type="InterPro" id="IPR026470">
    <property type="entry name" value="Flavi_E_Stem/Anchor_dom"/>
</dbReference>
<dbReference type="InterPro" id="IPR038345">
    <property type="entry name" value="Flavi_E_Stem/Anchor_dom_sf"/>
</dbReference>
<dbReference type="InterPro" id="IPR011998">
    <property type="entry name" value="Flavi_Glycoprot_E_cen/dimer"/>
</dbReference>
<dbReference type="InterPro" id="IPR001157">
    <property type="entry name" value="Flavi_NS1"/>
</dbReference>
<dbReference type="InterPro" id="IPR000752">
    <property type="entry name" value="Flavi_NS2A"/>
</dbReference>
<dbReference type="InterPro" id="IPR000487">
    <property type="entry name" value="Flavi_NS2B"/>
</dbReference>
<dbReference type="InterPro" id="IPR001850">
    <property type="entry name" value="Flavi_NS3_S7"/>
</dbReference>
<dbReference type="InterPro" id="IPR000404">
    <property type="entry name" value="Flavi_NS4A"/>
</dbReference>
<dbReference type="InterPro" id="IPR001528">
    <property type="entry name" value="Flavi_NS4B"/>
</dbReference>
<dbReference type="InterPro" id="IPR046811">
    <property type="entry name" value="Flavi_NS5_thumb"/>
</dbReference>
<dbReference type="InterPro" id="IPR002535">
    <property type="entry name" value="Flavi_propep"/>
</dbReference>
<dbReference type="InterPro" id="IPR038688">
    <property type="entry name" value="Flavi_propep_sf"/>
</dbReference>
<dbReference type="InterPro" id="IPR047530">
    <property type="entry name" value="Flavi_RdRp"/>
</dbReference>
<dbReference type="InterPro" id="IPR000208">
    <property type="entry name" value="Flavi_RdRp_fingers/palm"/>
</dbReference>
<dbReference type="InterPro" id="IPR000336">
    <property type="entry name" value="Flavivir/Alphavir_Ig-like_sf"/>
</dbReference>
<dbReference type="InterPro" id="IPR014412">
    <property type="entry name" value="Gen_Poly_FLV"/>
</dbReference>
<dbReference type="InterPro" id="IPR036253">
    <property type="entry name" value="Glycoprot_cen/dimer_sf"/>
</dbReference>
<dbReference type="InterPro" id="IPR038055">
    <property type="entry name" value="Glycoprot_E_dimer_dom"/>
</dbReference>
<dbReference type="InterPro" id="IPR013756">
    <property type="entry name" value="GlyE_cen_dom_subdom2"/>
</dbReference>
<dbReference type="InterPro" id="IPR014001">
    <property type="entry name" value="Helicase_ATP-bd"/>
</dbReference>
<dbReference type="InterPro" id="IPR001650">
    <property type="entry name" value="Helicase_C-like"/>
</dbReference>
<dbReference type="InterPro" id="IPR014756">
    <property type="entry name" value="Ig_E-set"/>
</dbReference>
<dbReference type="InterPro" id="IPR026490">
    <property type="entry name" value="mRNA_cap_0/1_MeTrfase"/>
</dbReference>
<dbReference type="InterPro" id="IPR049486">
    <property type="entry name" value="NS3-hel_C_flaviviridae"/>
</dbReference>
<dbReference type="InterPro" id="IPR027417">
    <property type="entry name" value="P-loop_NTPase"/>
</dbReference>
<dbReference type="InterPro" id="IPR009003">
    <property type="entry name" value="Peptidase_S1_PA"/>
</dbReference>
<dbReference type="InterPro" id="IPR043504">
    <property type="entry name" value="Peptidase_S1_PA_chymotrypsin"/>
</dbReference>
<dbReference type="InterPro" id="IPR007094">
    <property type="entry name" value="RNA-dir_pol_PSvirus"/>
</dbReference>
<dbReference type="InterPro" id="IPR002877">
    <property type="entry name" value="RNA_MeTrfase_FtsJ_dom"/>
</dbReference>
<dbReference type="InterPro" id="IPR029063">
    <property type="entry name" value="SAM-dependent_MTases_sf"/>
</dbReference>
<dbReference type="NCBIfam" id="TIGR04240">
    <property type="entry name" value="flavi_E_stem"/>
    <property type="match status" value="1"/>
</dbReference>
<dbReference type="Pfam" id="PF20907">
    <property type="entry name" value="Flav_NS3-hel_C"/>
    <property type="match status" value="1"/>
</dbReference>
<dbReference type="Pfam" id="PF01003">
    <property type="entry name" value="Flavi_capsid"/>
    <property type="match status" value="1"/>
</dbReference>
<dbReference type="Pfam" id="PF07652">
    <property type="entry name" value="Flavi_DEAD"/>
    <property type="match status" value="1"/>
</dbReference>
<dbReference type="Pfam" id="PF21659">
    <property type="entry name" value="Flavi_E_stem"/>
    <property type="match status" value="1"/>
</dbReference>
<dbReference type="Pfam" id="PF02832">
    <property type="entry name" value="Flavi_glycop_C"/>
    <property type="match status" value="1"/>
</dbReference>
<dbReference type="Pfam" id="PF00869">
    <property type="entry name" value="Flavi_glycoprot"/>
    <property type="match status" value="1"/>
</dbReference>
<dbReference type="Pfam" id="PF01004">
    <property type="entry name" value="Flavi_M"/>
    <property type="match status" value="1"/>
</dbReference>
<dbReference type="Pfam" id="PF00948">
    <property type="entry name" value="Flavi_NS1"/>
    <property type="match status" value="1"/>
</dbReference>
<dbReference type="Pfam" id="PF01005">
    <property type="entry name" value="Flavi_NS2A"/>
    <property type="match status" value="1"/>
</dbReference>
<dbReference type="Pfam" id="PF01002">
    <property type="entry name" value="Flavi_NS2B"/>
    <property type="match status" value="1"/>
</dbReference>
<dbReference type="Pfam" id="PF01350">
    <property type="entry name" value="Flavi_NS4A"/>
    <property type="match status" value="1"/>
</dbReference>
<dbReference type="Pfam" id="PF01349">
    <property type="entry name" value="Flavi_NS4B"/>
    <property type="match status" value="1"/>
</dbReference>
<dbReference type="Pfam" id="PF00972">
    <property type="entry name" value="Flavi_NS5"/>
    <property type="match status" value="1"/>
</dbReference>
<dbReference type="Pfam" id="PF20483">
    <property type="entry name" value="Flavi_NS5_thumb"/>
    <property type="match status" value="1"/>
</dbReference>
<dbReference type="Pfam" id="PF01570">
    <property type="entry name" value="Flavi_propep"/>
    <property type="match status" value="1"/>
</dbReference>
<dbReference type="Pfam" id="PF01728">
    <property type="entry name" value="FtsJ"/>
    <property type="match status" value="1"/>
</dbReference>
<dbReference type="Pfam" id="PF00949">
    <property type="entry name" value="Peptidase_S7"/>
    <property type="match status" value="1"/>
</dbReference>
<dbReference type="PIRSF" id="PIRSF003817">
    <property type="entry name" value="Gen_Poly_FLV"/>
    <property type="match status" value="1"/>
</dbReference>
<dbReference type="SMART" id="SM00487">
    <property type="entry name" value="DEXDc"/>
    <property type="match status" value="1"/>
</dbReference>
<dbReference type="SMART" id="SM00490">
    <property type="entry name" value="HELICc"/>
    <property type="match status" value="1"/>
</dbReference>
<dbReference type="SUPFAM" id="SSF56672">
    <property type="entry name" value="DNA/RNA polymerases"/>
    <property type="match status" value="1"/>
</dbReference>
<dbReference type="SUPFAM" id="SSF81296">
    <property type="entry name" value="E set domains"/>
    <property type="match status" value="1"/>
</dbReference>
<dbReference type="SUPFAM" id="SSF101257">
    <property type="entry name" value="Flavivirus capsid protein C"/>
    <property type="match status" value="1"/>
</dbReference>
<dbReference type="SUPFAM" id="SSF52540">
    <property type="entry name" value="P-loop containing nucleoside triphosphate hydrolases"/>
    <property type="match status" value="2"/>
</dbReference>
<dbReference type="SUPFAM" id="SSF53335">
    <property type="entry name" value="S-adenosyl-L-methionine-dependent methyltransferases"/>
    <property type="match status" value="1"/>
</dbReference>
<dbReference type="SUPFAM" id="SSF50494">
    <property type="entry name" value="Trypsin-like serine proteases"/>
    <property type="match status" value="1"/>
</dbReference>
<dbReference type="SUPFAM" id="SSF56983">
    <property type="entry name" value="Viral glycoprotein, central and dimerisation domains"/>
    <property type="match status" value="1"/>
</dbReference>
<dbReference type="PROSITE" id="PS51527">
    <property type="entry name" value="FLAVIVIRUS_NS2B"/>
    <property type="match status" value="1"/>
</dbReference>
<dbReference type="PROSITE" id="PS51528">
    <property type="entry name" value="FLAVIVIRUS_NS3PRO"/>
    <property type="match status" value="1"/>
</dbReference>
<dbReference type="PROSITE" id="PS51192">
    <property type="entry name" value="HELICASE_ATP_BIND_1"/>
    <property type="match status" value="1"/>
</dbReference>
<dbReference type="PROSITE" id="PS51194">
    <property type="entry name" value="HELICASE_CTER"/>
    <property type="match status" value="1"/>
</dbReference>
<dbReference type="PROSITE" id="PS50507">
    <property type="entry name" value="RDRP_SSRNA_POS"/>
    <property type="match status" value="1"/>
</dbReference>
<dbReference type="PROSITE" id="PS51591">
    <property type="entry name" value="RNA_CAP01_NS5_MT"/>
    <property type="match status" value="1"/>
</dbReference>
<organism>
    <name type="scientific">Dengue virus type 2 (strain Thailand/16681/1984)</name>
    <name type="common">DENV-2</name>
    <dbReference type="NCBI Taxonomy" id="31634"/>
    <lineage>
        <taxon>Viruses</taxon>
        <taxon>Riboviria</taxon>
        <taxon>Orthornavirae</taxon>
        <taxon>Kitrinoviricota</taxon>
        <taxon>Flasuviricetes</taxon>
        <taxon>Amarillovirales</taxon>
        <taxon>Flaviviridae</taxon>
        <taxon>Orthoflavivirus</taxon>
        <taxon>Orthoflavivirus denguei</taxon>
        <taxon>Dengue virus</taxon>
    </lineage>
</organism>
<name>POLG_DEN26</name>
<feature type="chain" id="PRO_0000405213" description="Genome polyprotein">
    <location>
        <begin position="1"/>
        <end position="3391"/>
    </location>
</feature>
<feature type="chain" id="PRO_0000037925" description="Capsid protein C" evidence="25">
    <location>
        <begin position="1"/>
        <end position="100"/>
    </location>
</feature>
<feature type="propeptide" id="PRO_0000037926" description="ER anchor for the capsid protein C, removed in mature form by serine protease NS3" evidence="25">
    <location>
        <begin position="101"/>
        <end position="114"/>
    </location>
</feature>
<feature type="chain" id="PRO_0000264673" description="Protein prM" evidence="25">
    <location>
        <begin position="115"/>
        <end position="280"/>
    </location>
</feature>
<feature type="chain" id="PRO_0000264674" description="Peptide pr" evidence="18">
    <location>
        <begin position="115"/>
        <end position="205"/>
    </location>
</feature>
<feature type="chain" id="PRO_0000037927" description="Small envelope protein M" evidence="25">
    <location>
        <begin position="206"/>
        <end position="280"/>
    </location>
</feature>
<feature type="chain" id="PRO_0000037928" description="Envelope protein E" evidence="25">
    <location>
        <begin position="281"/>
        <end position="775"/>
    </location>
</feature>
<feature type="chain" id="PRO_0000037929" description="Non-structural protein 1" evidence="25">
    <location>
        <begin position="776"/>
        <end position="1127"/>
    </location>
</feature>
<feature type="chain" id="PRO_0000037930" description="Non-structural protein 2A" evidence="25">
    <location>
        <begin position="1128"/>
        <end position="1345"/>
    </location>
</feature>
<feature type="chain" id="PRO_0000037931" description="Serine protease subunit NS2B" evidence="25">
    <location>
        <begin position="1346"/>
        <end position="1475"/>
    </location>
</feature>
<feature type="chain" id="PRO_0000037932" description="Serine protease NS3" evidence="25">
    <location>
        <begin position="1476"/>
        <end position="2093"/>
    </location>
</feature>
<feature type="chain" id="PRO_0000037933" description="Non-structural protein 4A" evidence="25">
    <location>
        <begin position="2094"/>
        <end position="2220"/>
    </location>
</feature>
<feature type="peptide" id="PRO_0000264676" description="Peptide 2k" evidence="25">
    <location>
        <begin position="2221"/>
        <end position="2243"/>
    </location>
</feature>
<feature type="chain" id="PRO_0000037934" description="Non-structural protein 4B" evidence="25">
    <location>
        <begin position="2244"/>
        <end position="2491"/>
    </location>
</feature>
<feature type="chain" id="PRO_0000037935" description="RNA-directed RNA polymerase NS5" evidence="25">
    <location>
        <begin position="2492"/>
        <end position="3391"/>
    </location>
</feature>
<feature type="topological domain" description="Cytoplasmic" evidence="10">
    <location>
        <begin position="1"/>
        <end position="101"/>
    </location>
</feature>
<feature type="transmembrane region" description="Helical" evidence="10">
    <location>
        <begin position="102"/>
        <end position="119"/>
    </location>
</feature>
<feature type="topological domain" description="Extracellular" evidence="10">
    <location>
        <begin position="120"/>
        <end position="242"/>
    </location>
</feature>
<feature type="transmembrane region" description="Helical" evidence="10">
    <location>
        <begin position="243"/>
        <end position="260"/>
    </location>
</feature>
<feature type="topological domain" description="Cytoplasmic" evidence="10">
    <location>
        <position position="261"/>
    </location>
</feature>
<feature type="transmembrane region" description="Helical" evidence="10">
    <location>
        <begin position="262"/>
        <end position="280"/>
    </location>
</feature>
<feature type="topological domain" description="Extracellular" evidence="10">
    <location>
        <begin position="281"/>
        <end position="725"/>
    </location>
</feature>
<feature type="transmembrane region" description="Helical" evidence="10">
    <location>
        <begin position="726"/>
        <end position="746"/>
    </location>
</feature>
<feature type="topological domain" description="Cytoplasmic" evidence="10">
    <location>
        <begin position="747"/>
        <end position="752"/>
    </location>
</feature>
<feature type="transmembrane region" description="Helical" evidence="10">
    <location>
        <begin position="753"/>
        <end position="773"/>
    </location>
</feature>
<feature type="topological domain" description="Extracellular" evidence="10">
    <location>
        <begin position="774"/>
        <end position="1195"/>
    </location>
</feature>
<feature type="transmembrane region" description="Helical" evidence="10">
    <location>
        <begin position="1196"/>
        <end position="1220"/>
    </location>
</feature>
<feature type="topological domain" description="Cytoplasmic" evidence="10">
    <location>
        <begin position="1221"/>
        <end position="1226"/>
    </location>
</feature>
<feature type="transmembrane region" description="Helical" evidence="10">
    <location>
        <begin position="1227"/>
        <end position="1245"/>
    </location>
</feature>
<feature type="topological domain" description="Lumenal" evidence="10">
    <location>
        <begin position="1246"/>
        <end position="1269"/>
    </location>
</feature>
<feature type="transmembrane region" description="Helical" evidence="10">
    <location>
        <begin position="1270"/>
        <end position="1290"/>
    </location>
</feature>
<feature type="topological domain" description="Cytoplasmic" evidence="10">
    <location>
        <position position="1291"/>
    </location>
</feature>
<feature type="transmembrane region" description="Helical" evidence="10">
    <location>
        <begin position="1292"/>
        <end position="1310"/>
    </location>
</feature>
<feature type="topological domain" description="Lumenal" evidence="10">
    <location>
        <begin position="1311"/>
        <end position="1317"/>
    </location>
</feature>
<feature type="transmembrane region" description="Helical" evidence="10">
    <location>
        <begin position="1318"/>
        <end position="1338"/>
    </location>
</feature>
<feature type="topological domain" description="Cytoplasmic" evidence="10">
    <location>
        <begin position="1339"/>
        <end position="1346"/>
    </location>
</feature>
<feature type="transmembrane region" description="Helical" evidence="10">
    <location>
        <begin position="1347"/>
        <end position="1367"/>
    </location>
</feature>
<feature type="topological domain" description="Lumenal" evidence="10">
    <location>
        <begin position="1368"/>
        <end position="1370"/>
    </location>
</feature>
<feature type="transmembrane region" description="Helical" evidence="10">
    <location>
        <begin position="1371"/>
        <end position="1391"/>
    </location>
</feature>
<feature type="topological domain" description="Cytoplasmic" evidence="10">
    <location>
        <begin position="1392"/>
        <end position="1447"/>
    </location>
</feature>
<feature type="intramembrane region" description="Helical" evidence="10">
    <location>
        <begin position="1448"/>
        <end position="1468"/>
    </location>
</feature>
<feature type="topological domain" description="Cytoplasmic" evidence="10">
    <location>
        <begin position="1469"/>
        <end position="2147"/>
    </location>
</feature>
<feature type="transmembrane region" description="Helical" evidence="10">
    <location>
        <begin position="2148"/>
        <end position="2168"/>
    </location>
</feature>
<feature type="topological domain" description="Lumenal" evidence="10">
    <location>
        <begin position="2169"/>
        <end position="2170"/>
    </location>
</feature>
<feature type="intramembrane region" description="Helical" evidence="10">
    <location>
        <begin position="2171"/>
        <end position="2191"/>
    </location>
</feature>
<feature type="topological domain" description="Lumenal" evidence="10">
    <location>
        <position position="2192"/>
    </location>
</feature>
<feature type="transmembrane region" description="Helical" evidence="10">
    <location>
        <begin position="2193"/>
        <end position="2213"/>
    </location>
</feature>
<feature type="topological domain" description="Cytoplasmic" evidence="10">
    <location>
        <begin position="2214"/>
        <end position="2228"/>
    </location>
</feature>
<feature type="transmembrane region" description="Helical; Note=Signal for NS4B" evidence="10">
    <location>
        <begin position="2229"/>
        <end position="2249"/>
    </location>
</feature>
<feature type="topological domain" description="Lumenal" evidence="10">
    <location>
        <begin position="2250"/>
        <end position="2274"/>
    </location>
</feature>
<feature type="intramembrane region" description="Helical" evidence="10">
    <location>
        <begin position="2275"/>
        <end position="2295"/>
    </location>
</feature>
<feature type="topological domain" description="Lumenal" evidence="10">
    <location>
        <begin position="2296"/>
        <end position="2316"/>
    </location>
</feature>
<feature type="intramembrane region" description="Helical" evidence="10">
    <location>
        <begin position="2317"/>
        <end position="2337"/>
    </location>
</feature>
<feature type="topological domain" description="Lumenal" evidence="10">
    <location>
        <begin position="2338"/>
        <end position="2347"/>
    </location>
</feature>
<feature type="transmembrane region" description="Helical" evidence="10">
    <location>
        <begin position="2348"/>
        <end position="2368"/>
    </location>
</feature>
<feature type="topological domain" description="Cytoplasmic" evidence="10">
    <location>
        <begin position="2369"/>
        <end position="2413"/>
    </location>
</feature>
<feature type="transmembrane region" description="Helical" evidence="10">
    <location>
        <begin position="2414"/>
        <end position="2434"/>
    </location>
</feature>
<feature type="topological domain" description="Lumenal" evidence="10">
    <location>
        <begin position="2435"/>
        <end position="2459"/>
    </location>
</feature>
<feature type="transmembrane region" description="Helical" evidence="10">
    <location>
        <begin position="2460"/>
        <end position="2480"/>
    </location>
</feature>
<feature type="topological domain" description="Cytoplasmic" evidence="10">
    <location>
        <begin position="2481"/>
        <end position="3391"/>
    </location>
</feature>
<feature type="domain" description="Peptidase S7" evidence="15">
    <location>
        <begin position="1476"/>
        <end position="1653"/>
    </location>
</feature>
<feature type="domain" description="Helicase ATP-binding" evidence="13">
    <location>
        <begin position="1655"/>
        <end position="1811"/>
    </location>
</feature>
<feature type="domain" description="Helicase C-terminal">
    <location>
        <begin position="1821"/>
        <end position="1988"/>
    </location>
</feature>
<feature type="domain" description="mRNA cap 0-1 NS5-type MT" evidence="16">
    <location>
        <begin position="2493"/>
        <end position="2755"/>
    </location>
</feature>
<feature type="domain" description="RdRp catalytic" evidence="12">
    <location>
        <begin position="3020"/>
        <end position="3169"/>
    </location>
</feature>
<feature type="region of interest" description="Interaction with host EXOC1" evidence="5">
    <location>
        <begin position="1"/>
        <end position="15"/>
    </location>
</feature>
<feature type="region of interest" description="Hydrophobic; homodimerization of capsid protein C" evidence="20">
    <location>
        <begin position="37"/>
        <end position="72"/>
    </location>
</feature>
<feature type="region of interest" description="Fusion peptide" evidence="3">
    <location>
        <begin position="378"/>
        <end position="391"/>
    </location>
</feature>
<feature type="region of interest" description="Interacts with and activates NS3 protease" evidence="14">
    <location>
        <begin position="1398"/>
        <end position="1437"/>
    </location>
</feature>
<feature type="region of interest" description="Important for RNA-binding" evidence="4">
    <location>
        <begin position="1659"/>
        <end position="1662"/>
    </location>
</feature>
<feature type="short sequence motif" description="DEAH box" evidence="13">
    <location>
        <begin position="1759"/>
        <end position="1762"/>
    </location>
</feature>
<feature type="short sequence motif" description="SUMO-interacting motif" evidence="30">
    <location>
        <begin position="2568"/>
        <end position="2571"/>
    </location>
</feature>
<feature type="active site" description="Charge relay system; for serine protease NS3 activity" evidence="15">
    <location>
        <position position="1526"/>
    </location>
</feature>
<feature type="active site" description="Charge relay system; for serine protease NS3 activity" evidence="15">
    <location>
        <position position="1550"/>
    </location>
</feature>
<feature type="active site" description="Charge relay system; for serine protease NS3 activity" evidence="15">
    <location>
        <position position="1610"/>
    </location>
</feature>
<feature type="active site" description="For 2'-O-MTase activity" evidence="8">
    <location>
        <position position="2552"/>
    </location>
</feature>
<feature type="active site" description="For 2'-O-MTase activity" evidence="8">
    <location>
        <position position="2637"/>
    </location>
</feature>
<feature type="active site" description="For 2'-O-MTase activity" evidence="8">
    <location>
        <position position="2672"/>
    </location>
</feature>
<feature type="active site" description="For 2'-O-MTase activity" evidence="8">
    <location>
        <position position="2708"/>
    </location>
</feature>
<feature type="binding site" evidence="13">
    <location>
        <begin position="1668"/>
        <end position="1675"/>
    </location>
    <ligand>
        <name>ATP</name>
        <dbReference type="ChEBI" id="CHEBI:30616"/>
    </ligand>
</feature>
<feature type="binding site" evidence="16">
    <location>
        <position position="2547"/>
    </location>
    <ligand>
        <name>S-adenosyl-L-methionine</name>
        <dbReference type="ChEBI" id="CHEBI:59789"/>
    </ligand>
</feature>
<feature type="binding site" evidence="16">
    <location>
        <position position="2577"/>
    </location>
    <ligand>
        <name>S-adenosyl-L-methionine</name>
        <dbReference type="ChEBI" id="CHEBI:59789"/>
    </ligand>
</feature>
<feature type="binding site" evidence="16">
    <location>
        <position position="2578"/>
    </location>
    <ligand>
        <name>S-adenosyl-L-methionine</name>
        <dbReference type="ChEBI" id="CHEBI:59789"/>
    </ligand>
</feature>
<feature type="binding site" evidence="16">
    <location>
        <position position="2595"/>
    </location>
    <ligand>
        <name>S-adenosyl-L-methionine</name>
        <dbReference type="ChEBI" id="CHEBI:59789"/>
    </ligand>
</feature>
<feature type="binding site" evidence="16">
    <location>
        <position position="2596"/>
    </location>
    <ligand>
        <name>S-adenosyl-L-methionine</name>
        <dbReference type="ChEBI" id="CHEBI:59789"/>
    </ligand>
</feature>
<feature type="binding site" evidence="16">
    <location>
        <position position="2622"/>
    </location>
    <ligand>
        <name>S-adenosyl-L-methionine</name>
        <dbReference type="ChEBI" id="CHEBI:59789"/>
    </ligand>
</feature>
<feature type="binding site" evidence="16">
    <location>
        <position position="2623"/>
    </location>
    <ligand>
        <name>S-adenosyl-L-methionine</name>
        <dbReference type="ChEBI" id="CHEBI:59789"/>
    </ligand>
</feature>
<feature type="binding site" evidence="16">
    <location>
        <position position="2638"/>
    </location>
    <ligand>
        <name>S-adenosyl-L-methionine</name>
        <dbReference type="ChEBI" id="CHEBI:59789"/>
    </ligand>
</feature>
<feature type="binding site" evidence="16">
    <location>
        <position position="2710"/>
    </location>
    <ligand>
        <name>S-adenosyl-L-methionine</name>
        <dbReference type="ChEBI" id="CHEBI:59789"/>
    </ligand>
</feature>
<feature type="binding site" evidence="8">
    <location>
        <position position="2929"/>
    </location>
    <ligand>
        <name>Zn(2+)</name>
        <dbReference type="ChEBI" id="CHEBI:29105"/>
        <label>1</label>
    </ligand>
</feature>
<feature type="binding site" evidence="8">
    <location>
        <position position="2933"/>
    </location>
    <ligand>
        <name>Zn(2+)</name>
        <dbReference type="ChEBI" id="CHEBI:29105"/>
        <label>1</label>
    </ligand>
</feature>
<feature type="binding site" evidence="8">
    <location>
        <position position="2938"/>
    </location>
    <ligand>
        <name>Zn(2+)</name>
        <dbReference type="ChEBI" id="CHEBI:29105"/>
        <label>1</label>
    </ligand>
</feature>
<feature type="binding site" evidence="8">
    <location>
        <position position="2941"/>
    </location>
    <ligand>
        <name>Zn(2+)</name>
        <dbReference type="ChEBI" id="CHEBI:29105"/>
        <label>1</label>
    </ligand>
</feature>
<feature type="binding site" evidence="8">
    <location>
        <position position="3203"/>
    </location>
    <ligand>
        <name>Zn(2+)</name>
        <dbReference type="ChEBI" id="CHEBI:29105"/>
        <label>2</label>
    </ligand>
</feature>
<feature type="binding site" evidence="8">
    <location>
        <position position="3219"/>
    </location>
    <ligand>
        <name>Zn(2+)</name>
        <dbReference type="ChEBI" id="CHEBI:29105"/>
        <label>2</label>
    </ligand>
</feature>
<feature type="binding site" evidence="8">
    <location>
        <position position="3338"/>
    </location>
    <ligand>
        <name>Zn(2+)</name>
        <dbReference type="ChEBI" id="CHEBI:29105"/>
        <label>2</label>
    </ligand>
</feature>
<feature type="site" description="Cleavage; by viral protease NS3" evidence="25">
    <location>
        <begin position="100"/>
        <end position="101"/>
    </location>
</feature>
<feature type="site" description="Cleavage; by host signal peptidase" evidence="25">
    <location>
        <begin position="114"/>
        <end position="115"/>
    </location>
</feature>
<feature type="site" description="Cleavage; by host furin" evidence="10 18">
    <location>
        <begin position="205"/>
        <end position="206"/>
    </location>
</feature>
<feature type="site" description="Cleavage; by host signal peptidase" evidence="25">
    <location>
        <begin position="280"/>
        <end position="281"/>
    </location>
</feature>
<feature type="site" description="Cleavage; by host signal peptidase" evidence="25">
    <location>
        <begin position="775"/>
        <end position="776"/>
    </location>
</feature>
<feature type="site" description="Cleavage; by host" evidence="25">
    <location>
        <begin position="1127"/>
        <end position="1128"/>
    </location>
</feature>
<feature type="site" description="Cleavage; by viral protease NS3" evidence="25">
    <location>
        <begin position="1345"/>
        <end position="1346"/>
    </location>
</feature>
<feature type="site" description="Cleavage; by autolysis" evidence="25">
    <location>
        <begin position="1475"/>
        <end position="1476"/>
    </location>
</feature>
<feature type="site" description="Involved in NS3 ATPase and RTPase activities" evidence="2">
    <location>
        <position position="1932"/>
    </location>
</feature>
<feature type="site" description="Involved in NS3 ATPase and RTPase activities" evidence="2">
    <location>
        <position position="1935"/>
    </location>
</feature>
<feature type="site" description="Cleavage; by autolysis" evidence="25">
    <location>
        <begin position="2093"/>
        <end position="2094"/>
    </location>
</feature>
<feature type="site" description="Cleavage; by viral protease NS3" evidence="25">
    <location>
        <begin position="2220"/>
        <end position="2221"/>
    </location>
</feature>
<feature type="site" description="Cleavage; by host signal peptidase" evidence="25">
    <location>
        <begin position="2243"/>
        <end position="2244"/>
    </location>
</feature>
<feature type="site" description="Cleavage; by viral protease NS3" evidence="25">
    <location>
        <begin position="2491"/>
        <end position="2492"/>
    </location>
</feature>
<feature type="site" description="mRNA cap binding" evidence="16">
    <location>
        <position position="2505"/>
    </location>
</feature>
<feature type="site" description="mRNA cap binding; via carbonyl oxygen" evidence="16">
    <location>
        <position position="2508"/>
    </location>
</feature>
<feature type="site" description="mRNA cap binding" evidence="16">
    <location>
        <position position="2509"/>
    </location>
</feature>
<feature type="site" description="mRNA cap binding; via carbonyl oxygen" evidence="16">
    <location>
        <position position="2511"/>
    </location>
</feature>
<feature type="site" description="mRNA cap binding" evidence="16">
    <location>
        <position position="2516"/>
    </location>
</feature>
<feature type="site" description="mRNA cap binding" evidence="16">
    <location>
        <position position="2520"/>
    </location>
</feature>
<feature type="site" description="Essential for 2'-O-methyltransferase activity" evidence="16">
    <location>
        <position position="2552"/>
    </location>
</feature>
<feature type="site" description="Essential for 2'-O-methyltransferase and N-7 methyltransferase activity" evidence="16">
    <location>
        <position position="2637"/>
    </location>
</feature>
<feature type="site" description="mRNA cap binding" evidence="16">
    <location>
        <position position="2641"/>
    </location>
</feature>
<feature type="site" description="Essential for 2'-O-methyltransferase activity" evidence="16">
    <location>
        <position position="2672"/>
    </location>
</feature>
<feature type="site" description="mRNA cap binding" evidence="16">
    <location>
        <position position="2703"/>
    </location>
</feature>
<feature type="site" description="mRNA cap binding" evidence="16">
    <location>
        <position position="2705"/>
    </location>
</feature>
<feature type="site" description="Essential for 2'-O-methyltransferase activity" evidence="16">
    <location>
        <position position="2708"/>
    </location>
</feature>
<feature type="modified residue" description="N6-acetyllysine; by host" evidence="7">
    <location>
        <position position="1863"/>
    </location>
</feature>
<feature type="modified residue" description="Phosphoserine" evidence="1">
    <location>
        <position position="2547"/>
    </location>
</feature>
<feature type="glycosylation site" description="N-linked (GlcNAc...) asparagine; by host" evidence="11">
    <location>
        <position position="183"/>
    </location>
</feature>
<feature type="glycosylation site" description="N-linked (GlcNAc...) asparagine; by host" evidence="11">
    <location>
        <position position="347"/>
    </location>
</feature>
<feature type="glycosylation site" description="N-linked (GlcNAc...) asparagine; by host" evidence="11">
    <location>
        <position position="433"/>
    </location>
</feature>
<feature type="glycosylation site" description="N-linked (GlcNAc...) asparagine; by host" evidence="11">
    <location>
        <position position="905"/>
    </location>
</feature>
<feature type="glycosylation site" description="N-linked (GlcNAc...) asparagine; by host" evidence="11">
    <location>
        <position position="982"/>
    </location>
</feature>
<feature type="glycosylation site" description="N-linked (GlcNAc...) asparagine; by host" evidence="11">
    <location>
        <position position="1134"/>
    </location>
</feature>
<feature type="glycosylation site" description="N-linked (GlcNAc...) asparagine; by host" evidence="11">
    <location>
        <position position="1174"/>
    </location>
</feature>
<feature type="glycosylation site" description="N-linked (GlcNAc...) asparagine; by host" evidence="11">
    <location>
        <position position="2301"/>
    </location>
</feature>
<feature type="glycosylation site" description="N-linked (GlcNAc...) asparagine; by host" evidence="11">
    <location>
        <position position="2305"/>
    </location>
</feature>
<feature type="glycosylation site" description="N-linked (GlcNAc...) asparagine; by host" evidence="11">
    <location>
        <position position="2457"/>
    </location>
</feature>
<feature type="disulfide bond" evidence="19">
    <location>
        <begin position="283"/>
        <end position="310"/>
    </location>
</feature>
<feature type="disulfide bond" evidence="19">
    <location>
        <begin position="340"/>
        <end position="401"/>
    </location>
</feature>
<feature type="disulfide bond" evidence="19">
    <location>
        <begin position="354"/>
        <end position="385"/>
    </location>
</feature>
<feature type="disulfide bond" evidence="19">
    <location>
        <begin position="372"/>
        <end position="396"/>
    </location>
</feature>
<feature type="disulfide bond" evidence="19">
    <location>
        <begin position="465"/>
        <end position="565"/>
    </location>
</feature>
<feature type="disulfide bond" evidence="19">
    <location>
        <begin position="582"/>
        <end position="613"/>
    </location>
</feature>
<feature type="disulfide bond" evidence="5">
    <location>
        <begin position="779"/>
        <end position="790"/>
    </location>
</feature>
<feature type="disulfide bond" evidence="5">
    <location>
        <begin position="830"/>
        <end position="918"/>
    </location>
</feature>
<feature type="disulfide bond" evidence="5">
    <location>
        <begin position="954"/>
        <end position="998"/>
    </location>
</feature>
<feature type="disulfide bond" evidence="5">
    <location>
        <begin position="1055"/>
        <end position="1104"/>
    </location>
</feature>
<feature type="disulfide bond" evidence="5">
    <location>
        <begin position="1066"/>
        <end position="1088"/>
    </location>
</feature>
<feature type="disulfide bond" evidence="5">
    <location>
        <begin position="1087"/>
        <end position="1091"/>
    </location>
</feature>
<feature type="mutagenesis site" description="Loss of degradation of hSec3p." evidence="29">
    <original>F</original>
    <variation>A</variation>
    <location>
        <position position="13"/>
    </location>
</feature>
<feature type="mutagenesis site" description="Complete loss of NS5 sumoylation and decreased viral replication." evidence="30">
    <original>VVDL</original>
    <variation>AAAA</variation>
    <location>
        <begin position="2568"/>
        <end position="2571"/>
    </location>
</feature>
<feature type="helix" evidence="34">
    <location>
        <begin position="282"/>
        <end position="285"/>
    </location>
</feature>
<feature type="strand" evidence="34">
    <location>
        <begin position="287"/>
        <end position="292"/>
    </location>
</feature>
<feature type="turn" evidence="34">
    <location>
        <begin position="297"/>
        <end position="299"/>
    </location>
</feature>
<feature type="strand" evidence="34">
    <location>
        <begin position="300"/>
        <end position="308"/>
    </location>
</feature>
<feature type="strand" evidence="34">
    <location>
        <begin position="310"/>
        <end position="313"/>
    </location>
</feature>
<feature type="strand" evidence="34">
    <location>
        <begin position="316"/>
        <end position="318"/>
    </location>
</feature>
<feature type="strand" evidence="34">
    <location>
        <begin position="321"/>
        <end position="330"/>
    </location>
</feature>
<feature type="strand" evidence="34">
    <location>
        <begin position="334"/>
        <end position="352"/>
    </location>
</feature>
<feature type="turn" evidence="34">
    <location>
        <begin position="363"/>
        <end position="366"/>
    </location>
</feature>
<feature type="strand" evidence="34">
    <location>
        <begin position="370"/>
        <end position="380"/>
    </location>
</feature>
<feature type="helix" evidence="34">
    <location>
        <begin position="381"/>
        <end position="383"/>
    </location>
</feature>
<feature type="strand" evidence="34">
    <location>
        <begin position="389"/>
        <end position="409"/>
    </location>
</feature>
<feature type="helix" evidence="34">
    <location>
        <begin position="412"/>
        <end position="414"/>
    </location>
</feature>
<feature type="strand" evidence="34">
    <location>
        <begin position="415"/>
        <end position="423"/>
    </location>
</feature>
<feature type="strand" evidence="34">
    <location>
        <begin position="437"/>
        <end position="445"/>
    </location>
</feature>
<feature type="strand" evidence="34">
    <location>
        <begin position="452"/>
        <end position="454"/>
    </location>
</feature>
<feature type="strand" evidence="34">
    <location>
        <begin position="456"/>
        <end position="466"/>
    </location>
</feature>
<feature type="turn" evidence="34">
    <location>
        <begin position="467"/>
        <end position="471"/>
    </location>
</feature>
<feature type="helix" evidence="34">
    <location>
        <begin position="473"/>
        <end position="475"/>
    </location>
</feature>
<feature type="strand" evidence="34">
    <location>
        <begin position="476"/>
        <end position="481"/>
    </location>
</feature>
<feature type="strand" evidence="34">
    <location>
        <begin position="484"/>
        <end position="489"/>
    </location>
</feature>
<feature type="helix" evidence="34">
    <location>
        <begin position="490"/>
        <end position="494"/>
    </location>
</feature>
<feature type="strand" evidence="34">
    <location>
        <begin position="500"/>
        <end position="502"/>
    </location>
</feature>
<feature type="strand" evidence="33">
    <location>
        <begin position="508"/>
        <end position="510"/>
    </location>
</feature>
<feature type="helix" evidence="34">
    <location>
        <begin position="514"/>
        <end position="516"/>
    </location>
</feature>
<feature type="strand" evidence="34">
    <location>
        <begin position="517"/>
        <end position="521"/>
    </location>
</feature>
<feature type="helix" evidence="34">
    <location>
        <begin position="523"/>
        <end position="525"/>
    </location>
</feature>
<feature type="strand" evidence="34">
    <location>
        <begin position="529"/>
        <end position="532"/>
    </location>
</feature>
<feature type="helix" evidence="34">
    <location>
        <begin position="537"/>
        <end position="543"/>
    </location>
</feature>
<feature type="strand" evidence="34">
    <location>
        <begin position="545"/>
        <end position="558"/>
    </location>
</feature>
<feature type="strand" evidence="34">
    <location>
        <begin position="561"/>
        <end position="568"/>
    </location>
</feature>
<feature type="strand" evidence="34">
    <location>
        <begin position="570"/>
        <end position="572"/>
    </location>
</feature>
<feature type="turn" evidence="34">
    <location>
        <begin position="575"/>
        <end position="578"/>
    </location>
</feature>
<feature type="strand" evidence="34">
    <location>
        <begin position="586"/>
        <end position="594"/>
    </location>
</feature>
<feature type="strand" evidence="34">
    <location>
        <begin position="600"/>
        <end position="606"/>
    </location>
</feature>
<feature type="strand" evidence="34">
    <location>
        <begin position="612"/>
        <end position="614"/>
    </location>
</feature>
<feature type="strand" evidence="34">
    <location>
        <begin position="618"/>
        <end position="620"/>
    </location>
</feature>
<feature type="strand" evidence="33">
    <location>
        <begin position="622"/>
        <end position="627"/>
    </location>
</feature>
<feature type="strand" evidence="34">
    <location>
        <begin position="629"/>
        <end position="635"/>
    </location>
</feature>
<feature type="strand" evidence="33">
    <location>
        <begin position="641"/>
        <end position="643"/>
    </location>
</feature>
<feature type="strand" evidence="34">
    <location>
        <begin position="645"/>
        <end position="650"/>
    </location>
</feature>
<feature type="strand" evidence="34">
    <location>
        <begin position="653"/>
        <end position="659"/>
    </location>
</feature>
<feature type="strand" evidence="34">
    <location>
        <begin position="663"/>
        <end position="665"/>
    </location>
</feature>
<feature type="strand" evidence="34">
    <location>
        <begin position="668"/>
        <end position="673"/>
    </location>
</feature>
<feature type="helix" evidence="34">
    <location>
        <begin position="677"/>
        <end position="695"/>
    </location>
</feature>
<feature type="helix" evidence="34">
    <location>
        <begin position="696"/>
        <end position="701"/>
    </location>
</feature>
<feature type="helix" evidence="34">
    <location>
        <begin position="708"/>
        <end position="727"/>
    </location>
</feature>
<feature type="strand" evidence="34">
    <location>
        <begin position="728"/>
        <end position="730"/>
    </location>
</feature>
<feature type="helix" evidence="34">
    <location>
        <begin position="733"/>
        <end position="749"/>
    </location>
</feature>
<feature type="turn" evidence="34">
    <location>
        <begin position="753"/>
        <end position="755"/>
    </location>
</feature>
<feature type="helix" evidence="34">
    <location>
        <begin position="756"/>
        <end position="771"/>
    </location>
</feature>
<feature type="strand" evidence="35">
    <location>
        <begin position="775"/>
        <end position="782"/>
    </location>
</feature>
<feature type="turn" evidence="35">
    <location>
        <begin position="783"/>
        <end position="786"/>
    </location>
</feature>
<feature type="strand" evidence="35">
    <location>
        <begin position="787"/>
        <end position="797"/>
    </location>
</feature>
<feature type="strand" evidence="35">
    <location>
        <begin position="799"/>
        <end position="801"/>
    </location>
</feature>
<feature type="strand" evidence="35">
    <location>
        <begin position="808"/>
        <end position="812"/>
    </location>
</feature>
<feature type="helix" evidence="35">
    <location>
        <begin position="814"/>
        <end position="826"/>
    </location>
</feature>
<feature type="helix" evidence="35">
    <location>
        <begin position="837"/>
        <end position="856"/>
    </location>
</feature>
<feature type="strand" evidence="35">
    <location>
        <begin position="863"/>
        <end position="865"/>
    </location>
</feature>
<feature type="strand" evidence="35">
    <location>
        <begin position="870"/>
        <end position="872"/>
    </location>
</feature>
<feature type="strand" evidence="35">
    <location>
        <begin position="908"/>
        <end position="913"/>
    </location>
</feature>
<feature type="strand" evidence="35">
    <location>
        <begin position="916"/>
        <end position="918"/>
    </location>
</feature>
<feature type="helix" evidence="35">
    <location>
        <begin position="920"/>
        <end position="922"/>
    </location>
</feature>
<feature type="strand" evidence="35">
    <location>
        <begin position="928"/>
        <end position="932"/>
    </location>
</feature>
<feature type="strand" evidence="35">
    <location>
        <begin position="941"/>
        <end position="946"/>
    </location>
</feature>
<feature type="helix" evidence="35">
    <location>
        <begin position="956"/>
        <end position="958"/>
    </location>
</feature>
<feature type="strand" evidence="35">
    <location>
        <begin position="960"/>
        <end position="964"/>
    </location>
</feature>
<feature type="strand" evidence="35">
    <location>
        <begin position="967"/>
        <end position="971"/>
    </location>
</feature>
<feature type="strand" evidence="35">
    <location>
        <begin position="973"/>
        <end position="993"/>
    </location>
</feature>
<feature type="helix" evidence="35">
    <location>
        <begin position="1002"/>
        <end position="1004"/>
    </location>
</feature>
<feature type="helix" evidence="35">
    <location>
        <begin position="1013"/>
        <end position="1015"/>
    </location>
</feature>
<feature type="helix" evidence="35">
    <location>
        <begin position="1020"/>
        <end position="1022"/>
    </location>
</feature>
<feature type="helix" evidence="35">
    <location>
        <begin position="1043"/>
        <end position="1045"/>
    </location>
</feature>
<feature type="strand" evidence="35">
    <location>
        <begin position="1046"/>
        <end position="1053"/>
    </location>
</feature>
<feature type="strand" evidence="35">
    <location>
        <begin position="1059"/>
        <end position="1062"/>
    </location>
</feature>
<feature type="strand" evidence="35">
    <location>
        <begin position="1073"/>
        <end position="1076"/>
    </location>
</feature>
<feature type="strand" evidence="35">
    <location>
        <begin position="1085"/>
        <end position="1090"/>
    </location>
</feature>
<feature type="strand" evidence="35">
    <location>
        <begin position="1096"/>
        <end position="1100"/>
    </location>
</feature>
<feature type="strand" evidence="35">
    <location>
        <begin position="1103"/>
        <end position="1106"/>
    </location>
</feature>
<feature type="strand" evidence="35">
    <location>
        <begin position="1110"/>
        <end position="1115"/>
    </location>
</feature>
<feature type="helix" evidence="35">
    <location>
        <begin position="1117"/>
        <end position="1119"/>
    </location>
</feature>
<protein>
    <recommendedName>
        <fullName>Genome polyprotein</fullName>
    </recommendedName>
    <component>
        <recommendedName>
            <fullName>Capsid protein C</fullName>
        </recommendedName>
        <alternativeName>
            <fullName>Core protein</fullName>
        </alternativeName>
    </component>
    <component>
        <recommendedName>
            <fullName>Protein prM</fullName>
        </recommendedName>
    </component>
    <component>
        <recommendedName>
            <fullName>Peptide pr</fullName>
        </recommendedName>
    </component>
    <component>
        <recommendedName>
            <fullName>Small envelope protein M</fullName>
        </recommendedName>
        <alternativeName>
            <fullName>Matrix protein</fullName>
        </alternativeName>
    </component>
    <component>
        <recommendedName>
            <fullName>Envelope protein E</fullName>
        </recommendedName>
    </component>
    <component>
        <recommendedName>
            <fullName>Non-structural protein 1</fullName>
            <shortName>NS1</shortName>
        </recommendedName>
    </component>
    <component>
        <recommendedName>
            <fullName>Non-structural protein 2A</fullName>
            <shortName>NS2A</shortName>
        </recommendedName>
    </component>
    <component>
        <recommendedName>
            <fullName>Serine protease subunit NS2B</fullName>
        </recommendedName>
        <alternativeName>
            <fullName>Flavivirin protease NS2B regulatory subunit</fullName>
        </alternativeName>
        <alternativeName>
            <fullName>Non-structural protein 2B</fullName>
        </alternativeName>
    </component>
    <component>
        <recommendedName>
            <fullName>Serine protease NS3</fullName>
            <ecNumber>3.4.21.91</ecNumber>
            <ecNumber evidence="9">3.6.1.15</ecNumber>
            <ecNumber evidence="9">3.6.4.13</ecNumber>
        </recommendedName>
        <alternativeName>
            <fullName>Flavivirin protease NS3 catalytic subunit</fullName>
        </alternativeName>
        <alternativeName>
            <fullName>Non-structural protein 3</fullName>
        </alternativeName>
    </component>
    <component>
        <recommendedName>
            <fullName>Non-structural protein 4A</fullName>
            <shortName>NS4A</shortName>
        </recommendedName>
    </component>
    <component>
        <recommendedName>
            <fullName>Peptide 2k</fullName>
        </recommendedName>
    </component>
    <component>
        <recommendedName>
            <fullName>Non-structural protein 4B</fullName>
            <shortName>NS4B</shortName>
        </recommendedName>
    </component>
    <component>
        <recommendedName>
            <fullName>RNA-directed RNA polymerase NS5</fullName>
            <ecNumber evidence="16">2.1.1.56</ecNumber>
            <ecNumber evidence="16">2.1.1.57</ecNumber>
            <ecNumber evidence="12">2.7.7.48</ecNumber>
        </recommendedName>
        <alternativeName>
            <fullName>Non-structural protein 5</fullName>
        </alternativeName>
    </component>
</protein>
<accession>P29990</accession>